<reference key="1">
    <citation type="journal article" date="2006" name="J. Virol.">
        <title>Comparative analysis of 22 coronavirus HKU1 genomes reveals a novel genotype and evidence of natural recombination in coronavirus HKU1.</title>
        <authorList>
            <person name="Woo P.C.Y."/>
            <person name="Lau S.K.P."/>
            <person name="Yip C.C.Y."/>
            <person name="Huang Y."/>
            <person name="Tsoi H.-W."/>
            <person name="Chan K.-H."/>
            <person name="Yuen K.-Y."/>
        </authorList>
    </citation>
    <scope>NUCLEOTIDE SEQUENCE [GENOMIC RNA]</scope>
</reference>
<sequence length="7152" mass="807495">MIKTSKYGLGFKWAPEFRWLLPDAAEELASPMKSDEGGLCPSTGQAMESVGFVYDNHVKIDCRCILGQEWHVQSNLIRDIFVHEDLHVVEVLTKTAVKSGTAILIKSPLHSLGGFPKGYVMGLFRSYKTKRYVVHHLSMTTSTTNFGEDFLGWIVPFGFMPSYVHKWFQFCRLYIEESDLIISNFKFDDYDFSVEDAYAEVHAEPKGKYSQKAYALLRQYRGIKPVLFVDQYGCDYSGKLADCLQAYGHYSLQDMRQKQSVWLANCDFDIVVAWHVVRDSRFVMRLQTIATICGIKYVAQPTEDVVDGAVVIREPVHLLSADAIVLKLPSLMKVMTHMDDFSIKSIYNVDLCDCGFVMQYGYVDCFNDNCDFYGWVSGNMMDGFSCPLCCTVYDSSEVKAQSSGVIPENPVLFTNSTDTVNPDSFNLYGYSVTPFGSCIYWSPRPGLWIPIIKSSVKSYDDLVYSGVVGCKSIVKETALITHALYLDYVQCKCGNLEQNHILGVNNSWCRQLLLNRGDYNMLLKNIDLFVKRRADFACKFAVCGDGFVPFLLDGLIPRSYYLIQSGIFFTSLMSQFSQEVSDMCLKMCILFMDRVSVATFYIEHYVNRLVTQFKLLGTTLVNKMVNWFNTMLDASAPATGWLLYQLLNGLFVVSQANFNFVALIPDYAKILVNKFYTFFKLLLECVTVDVLKDMPVLKTINGLVCIVGNKFYNVSTGLIPGFVLPCNAQEQQIYFFEGVAESVIVEDDVIENVKSSLSSYEYCQPPKSVEKICIIDNMYMGKCGDKFFPIVMNDKNICLLDQAWRFPCAGRKVNFNEKPVVMEIPSLMTVKVMFDLDSTFDDILGKVCSEFEVEKGVTVDDFVAVVCDAIENALNSCKDHPVVGYQVRAFLNKLNENVVYLFDEAGDEAMASRMYCTFAIEDVEDVISSEAVEDTIDGVVEDTINDDEDVVTGDNDDEDVVTGDNDDEDVVTGDNDDEDVVTGDNDDEDVVTGDNDDEDVVTGDNDDEDVVTGDNDDEDVVTGDNDDEDVVTGDNDDEDVVTGDNDDEDVVTGDNDDEEIVTGDNDDQIVVTGDDVDDIESVYDFDTYKALLVFNDVYNDALFVSYGSSVETETYFKVNGLWSPTITHTNCWLRSVLLVMQKLPFKFKDLAIENMWLSYKVGYNQSFVDYLLTTIPKAIVLPQGGYVADFAYWFLNQFDINAYANWCCLKCGFSFDLNGLDAVFFYGDIVSHVCKCGHNMTLIAADLPCTLHFSLFDDNFCAFCTPKKIFIAACAVDVNVCHSVAVIGDEQIDGKFVTKFSGDKFDFIVGYGMSFSMSSFELAQLYGLCITPNVCFVKGDIINVARLVKADVIVNPANGHMLHGGGVAKAIAVAAGKKFSKETAAMVKSKGVCQVGDCYVSTGGKLCKTILNIVGPDARQDGRQSYVLLARAYKHLNNYDCCLSTLISAGIFSVPADVSLTYLLGVVDKQVILVSNNKEDFDIIQKCQITSVVGTKALAVRLTANVGRVIKFETDAYKLFLSGDDCFVSNSSVIQEVLLLRHDIQLNNDVRDYLLSKMTSLPKDWRLINKFDVINGVKTVKYFECPNSIYICSQGKDFGYVCDGSFYKATVNQVCVLLAKKIDVLLTVDGVNFKSISLTVGEVFGKILGNVFCDGIDVTKLKCSDFYADKILYQYENLSLADISAVQSSFGFDQQQLLAYYNFLTVCKWSVVVNGPFFSFEQSHNNCYVNVACLMLQHINLKFNKWQWQEAWYEFRAGRPHRLVALVLAKGHFKFDEPSDATDFIRVVLKQADLSGAICELELICDCGIKQESRVGVDAVMHFGTLAKTDLFNGYKIGCNCAGRIVHCTKLNVPFLICSNTPLSKDLPDDVVAANMFMGVGVGHYTHLKCGSPYQHYDACSVKKYTGVSGCLTDCLYLKNLTQTFTSMLTNYFLDDVEMVAYNPDLSQYYCDNGKYYTKPIIKAQFKPFAKVDGVYTNFKLVGHDICAQLNDKLGFNVDLPFVEYKVTVWPVATGDVVLASDDLYVKRYFKGCETFGKPVIWLCHDEASLNSLTYFNKPSFKSENRYSVLSVDSVSEESQGNVVTSVMESQISTKEVKLKGVRKTVKIEDAIIVNDENSSIKVVKSLSLVDVWDMYLTGCDYVVWVANELSRLVKSPTVREYIRYGIKPITIPIDLLCLRDDNQTLLVPKIFKARAIEFYGFLKWLFIYVFSLLHFTNDKTIFYTTEIASKFTFNLFCLALKNAFQTFRWSIFIKGFLVVATVFLFWFNFLYINVIFSDFYLPNISVFPIFVGRIVMWIKATFGLVTICDFYSKLGVGFTSHFCNGSFICELCYSGFDMLDTYAAIDFVQYEVDRRVLFDYVSLVKLIVELVIGYSLYTVWFYPLFCLIGLQLFTTWLPDLFMLETMHWLIRFIVFVANMLPAFVLLRFYIVVTAMYKVVGFIRHIVYGCNKAGCLFCYKRNCSVRVKCSTIVGGVIRYYDITANGGTGFCVKHQWNCFNCHSFKPGNTFITVEAAIELSKELKRPVNPTDASHYVVTDIKQVGCMMRLFYDRDGQRVYDDVDASLFVDINNLLHSKVKVVPNLYVVVVESDADRANFLNAVVFYAQSLYRPILLVDKKLITTACNGISVTQTMFDVYVDTFMSHFDVDRKSFNNFVNIAHASLREGVQLEKVLDTFVGCVRKCCSIDSDVETRFITKSMISAVAAGLEFTDENYNNLVPTYLKSDNIVAADLGVLIQNGAKHVQGNVAKAANISCIWFIDTFNQLTADLQHKLKKACVKTGLKLKLTFNKQEASVPILTTPFSLKGGVVLSNLLYILFFISLICFILLWALLPTYSVYKSDIHLPAYASFKVIDNGVVRDISVNDLCFANKFFQFDQWYESTFGSFYYHNSMDCPIVVAVMDEDIGSTMFNVPTKVLRHGFHVLHFLTYAFASDSVQCYTPHIQISYNDFYASGCVLSSLCTMFKRGDGTPHPYCYSDGVMKNASLYTSLVPHTRYSLANSNGFIRFPDVISEGIVRIVRTRSMTYCRVGACEYAEEGICFNFNSSWVLNNDYYRSMPGTFCGRDLFDLFYQFFSSLIRPIDFFSLTASSIFGAILAIVVVLVFYYLIKLKRAFGDYTSVVVINVIVWCINFLMLFVFQVYPICACVYACFYFYVTLYFPSEISVIMHLQWIVMYGAIMPFWFCVTYVAMVIANHVLWLFSYCRKIGVNVCNDSTFEETSLTTFMITKDSYCRLKNSVSDVAYNRYLSLYNKYRYYSGKMDTAAYREAACSQLAKAMETFNHNNGNDVLYQPPTASVSTSFLQSGIVKMVSPTSKIEPCIVSVTYGSMTLNGLWLDDKVYCPRHVICLSSNMNEPDYSALLCRVTLGDFTIMSGRMSLTVVSYQMQGCQLVLTVSLQNPYTPKYTFGVVKPGETFTVLAAYNGRPQGAFHVTMRSSYTIKGSFLCGSCGSVGYVLTGDSVKFVYMHQLELSTGCHTGTDFTGNFYGPYRDAQVVQLPVKDYVQTVNVIAWLYAAILNNCAWFVQNDVCSIEDFNVWAMTNGFSQVKADLVLDALASMTGVSIETLLAAIKRLYMGFQGRQILGSCTFEDELAPSDVYQQLAGVKLQSKTKRFIKETIYWILISTFLFSCIISAFVKWTIFMYINTHMIGVTLCVLCFVSFMMLLVKHKHFYLTMYIIPVLCTLFYVNYLVVYKEGFRGLTYVWLSYFVPAVNFTYVYEVFYGCILCVFAIFITMHSINHDIFSLMFLVGRIVTLISMWYFGSNLEEDVLLFITAFLGTYTWTTILSLAIAKIVANWLSVNIFYFTDVPYIKLILLSYLFIGYILSCYWGFFSLLNSVFRMPMGVYNYKISVQELRYMNANGLRPPRNSFEAILLNLKLLGIGGVPVIEVSQIQSKLTDVKCANVVLLNCLQHLHVASNSRLWQYCSILHNEILSTSDLSVAFDKLAQLLIVLFANPAAVDTKCLASIDEVSDDYVQDSTVLQALQSEFVNMASFVEYEVAKKNLADAKNSGSVNQQQIKQLEKACNIAKSVYERDKAVARKLERMADLALTNMYKEARINDKKSKVVSALQTMLFSMVRKLDNQALNSILDNAVKGCVPLNAIPALAANTLTIIIPDKQVFDKVVDNVYVAYAGSVWHIQTVQDADGINKQLTDISVDSNWPLVIIANRYNEVANAVMQNNELMPHKLKIQVVNSGSDMNCNIPTQCYYNNGSSGRIVYAVLSDVDGLKYTKIIKDDGNCVVLELDPPCKFSIQDVKGLKIKYLYFIKGCNTLARGWVVGTLSSTIRLQAGVATEYAANSSILSLCAFSVDPKKTYLDYIQQGGVPIINCVKMLCDHAGTGMAITIKPEATINQDSYGGASVCIYCRARVEHPDVDGLCKLRGKFVQVPLGIKDPILYVLTHDVCQVCGFWRDGSCSCVGSGVAVQSKDLNFLNRVRGTSVNARLVPCASGLSTDVQLRAFDICNTNRAGIGLYYKVNCCRFQRIDDDGNKLDKFFVVKRTNLEVYNKEKTYYELTKSCGVVAEHDFFTFDIDGSRVPHIVRKNLSKYTMLDLCYALRHFDCNDCSVLCEILCEYADCKESYFSKKDWYDFVENPDIINIYKKLGPIFNRALLNTVSFADTLVKVGLVGVLTLDNQDLYGQWYDFGDFIQTAPGFGVAVADSYYSYMMPMLTMCHVLDCELFVNDSYRQFDLVQYDFTDYKLELFNKYFKYWGMKYHPNTVDCDNDRCIIHCANFNILFSMVLPNTCFGPLVRQIFVDGVPFVVSIGYHYKELGVVMNLDVDTHRYRLSLKDLLLYAADPAMHVASASALLDLRTCCFSVAAITSGIKFQTVKPGNFNQDFYEFVKSKGLFKEGSTVDLKHFFFTQDGNAAITDYNYYKYNLPTMVDIKQLLFVLEVVYKYFEIYDGGCIPASQVIVNNYDKSAGYPFNKFGKARLYYEALSFEEQNEIYAYTKRNVLPTLTQMNLKYAISAKNRARTVAGVSILSTMTGRMFHQKCLKSIAATRGVPVVIGTTKFYGGWDDMLRHLIKDVDNPVLMGWDYPKCDRAMPNILRIVSSLVLARKHEFCCSHGDRFYRLANECAQVLSEIVMCGGCYYVKPGGTSSGDATTAFANSVFNICQAVTANVCSLMACNGHKIEDLSIRNLQKRLYSNVYRTDYVDYTFVNEYYEFLCKHFSMMILSDDGVVCYNSDYASKGYIANISVFQQVLYYQNNVFMSESKCWVENDITNGPHEFCSQHTMLVKIDGDYVYLPYPDPSRILGAGCFVDDLLKTDSVLLIERFVSLAIDAYPLVHHENEEYQKVFRVYLEYIKKLYNDLGNQILDSYSVILSTCDGLKFTDESFYKNMYLKSAVMQSVGACVVCSSQTSLRCGSCIRKPLLCCKCCYDHVMATNHKYVLSVSPYVCNAPNCDVSDVTKLYLGGMSYYCENHKPHYSFKLVMNGMVFGLYKQSCTGSPYIDDFNKIASCKWTEVDDYVLANECIERLKLFAAETQKATEEAFKQSYASATIQEIVSDREIILCWETGKVKPPLNKNYVFTGYHFTSTGKTVLGEYVFDKSELTNGVYYRATTTYKLSIGDVFVLTSHSVANLSAPTLVPQENYASIRFSSVYSVPLLFQTNVANYQHIGMKRYCTVQGPPGTGKSHLAIGLAVYYYTARVVYTAASHAAVDALCEKAYKFLNINDCTRIIPAKVRVDCYDKFKINDTTCKYVFTTINALPELVTDIVVVDEVSMLTNYELSVINARVKAKHYVYIGDPAQLPAPRVLLSKGSLEPRHFNSITKIMCCLGPDIFLGNCYRCPKEIVETVSALVYDNKLKAKNDNSSLCFKVYFKGQTTHESSSAVNIQQIYLISKFLKANPVWNSAVFISPYNSQNYVAKRILGVQTQTVDSAQGSEYDYVIYSQTAETAHSINVNRFNVAITRAKKGIFCVMSNMQLFESLNFITLPLDKIQNQTLSRLHCTTNLFKDCSKNFLGYHPAHAPSFLSVDDKYKVNEDLAVCLNICEPVLTYSRLISLMGFKLDLTLDGYSKFFITKDEAIKRVRGWVGFDVEGAHATRDNIGTNFPLQIGFSTGVDFVVEATGLFAERDCYIFKRTVAKAPPGDNFKHLIPLMSKGQKWDVVRIRIVQMLSDYLLDLSDSVVFITWSASFELTCLRYFAKLGRELNCDVCPNRATCYNSRTGYYGCWRHSYTCDYVYNPLIVDIQQWGYTGSLTSNHDIICNVHKGAHVASSDAIMTRCLAIYDCFCKSVNWNLEYPIISNEVSINTSCRLLQRVMLKAAMLCNRYNLCYDIGNPKGIACVKDYEFKFYDASPVVKSVKQLFYVYDVHKDNFKDGLCMFWNCNVDKYPSNSIVCRFDTRVLNKLNLPGCNGGSLYVNKHAFHTNPFTRTVFENLKPMPFFYYSDTPCVYVDGLESKQVDYVPLRSATCITRCNLGGAVCSKHAEDYCKYLESYNVATTAGFTFWVYKTFDFYNLWNTFTMLQSLENVIYNLVNAGHYDGRIGELPCAIMNDKVVVKINNVDTVIFKNNTSLPTNIAVELFTKRSIRHHPELKILRNLNIDICWKHVLWDYVKDSLFCSSTYGVCKYTDLNFIENLNVLFDGRDNGALEAFRKARNGVFISTGKLSSLSMIKGPQRADLNGVIVDKVGELNVEFWFAMRKDGDDVIFSRADSLSPSHYWSPQGNLGGNCAGNASGNDALARFTIFTQSRVLSTFEPRSDLERDFIDMEDSLFIAKYGLEDYAFDHIVYGSFNYKVIGGLHLLIGLFRRLKKSNLVIQEFLQYDSSIHSYFITDQECGSSKSVCTVIDLLLDDFVVIVKSLNLNCVSKVVNINVDFKDFQFMLWCNDNKIMTFYPKMQATSDWKPGYSMPVLYKYLNVPLERVSLWNYGKAINLPTGCMMNVAKYTQLCQYLNTTTLAVPVNMRVLHLGAGSDKEVAPGSAVLRQWLPSGSILVDNDLNPFVSDSLVTYFGDCMTLPFDCHWDLIISDMYDPLTKNIGDYNVSKDGFFTYICYLIRDKLSLGGSVAIKITEFSWNADLYKLMSYFAFWTVFCTNVNASSSEGFLIGINYLGKSCFEIDGNVMHANYLFWRNSTTWNGGAYSLFDMSKFSLKLAGTAVVNLRPDQLNDLVYSLIERGKLLVRDTRKEIFVGDSLVNTC</sequence>
<dbReference type="EC" id="3.4.19.12"/>
<dbReference type="EC" id="3.4.22.-"/>
<dbReference type="EC" id="2.7.7.48"/>
<dbReference type="EC" id="2.7.7.50"/>
<dbReference type="EC" id="3.6.4.12"/>
<dbReference type="EC" id="3.6.4.13"/>
<dbReference type="EC" id="2.1.1.56"/>
<dbReference type="EC" id="3.1.13.-"/>
<dbReference type="EC" id="4.6.1.-"/>
<dbReference type="EC" id="2.1.1.57"/>
<dbReference type="EMBL" id="AY884001">
    <property type="protein sequence ID" value="AAX76519.1"/>
    <property type="molecule type" value="Genomic_RNA"/>
</dbReference>
<dbReference type="SMR" id="P0C6X3"/>
<dbReference type="IntAct" id="P0C6X3">
    <property type="interactions" value="1"/>
</dbReference>
<dbReference type="Proteomes" id="UP000006551">
    <property type="component" value="Genome"/>
</dbReference>
<dbReference type="GO" id="GO:0044172">
    <property type="term" value="C:host cell endoplasmic reticulum-Golgi intermediate compartment"/>
    <property type="evidence" value="ECO:0007669"/>
    <property type="project" value="UniProtKB-SubCell"/>
</dbReference>
<dbReference type="GO" id="GO:0033644">
    <property type="term" value="C:host cell membrane"/>
    <property type="evidence" value="ECO:0007669"/>
    <property type="project" value="UniProtKB-SubCell"/>
</dbReference>
<dbReference type="GO" id="GO:0044220">
    <property type="term" value="C:host cell perinuclear region of cytoplasm"/>
    <property type="evidence" value="ECO:0007669"/>
    <property type="project" value="UniProtKB-SubCell"/>
</dbReference>
<dbReference type="GO" id="GO:0016020">
    <property type="term" value="C:membrane"/>
    <property type="evidence" value="ECO:0007669"/>
    <property type="project" value="UniProtKB-KW"/>
</dbReference>
<dbReference type="GO" id="GO:0000175">
    <property type="term" value="F:3'-5'-RNA exonuclease activity"/>
    <property type="evidence" value="ECO:0007669"/>
    <property type="project" value="InterPro"/>
</dbReference>
<dbReference type="GO" id="GO:0043139">
    <property type="term" value="F:5'-3' DNA helicase activity"/>
    <property type="evidence" value="ECO:0007669"/>
    <property type="project" value="TreeGrafter"/>
</dbReference>
<dbReference type="GO" id="GO:0005524">
    <property type="term" value="F:ATP binding"/>
    <property type="evidence" value="ECO:0007669"/>
    <property type="project" value="UniProtKB-KW"/>
</dbReference>
<dbReference type="GO" id="GO:0016887">
    <property type="term" value="F:ATP hydrolysis activity"/>
    <property type="evidence" value="ECO:0007669"/>
    <property type="project" value="RHEA"/>
</dbReference>
<dbReference type="GO" id="GO:0004843">
    <property type="term" value="F:cysteine-type deubiquitinase activity"/>
    <property type="evidence" value="ECO:0007669"/>
    <property type="project" value="UniProtKB-EC"/>
</dbReference>
<dbReference type="GO" id="GO:0004197">
    <property type="term" value="F:cysteine-type endopeptidase activity"/>
    <property type="evidence" value="ECO:0007669"/>
    <property type="project" value="InterPro"/>
</dbReference>
<dbReference type="GO" id="GO:0004519">
    <property type="term" value="F:endonuclease activity"/>
    <property type="evidence" value="ECO:0007669"/>
    <property type="project" value="UniProtKB-KW"/>
</dbReference>
<dbReference type="GO" id="GO:0016829">
    <property type="term" value="F:lyase activity"/>
    <property type="evidence" value="ECO:0007669"/>
    <property type="project" value="UniProtKB-KW"/>
</dbReference>
<dbReference type="GO" id="GO:0004483">
    <property type="term" value="F:mRNA (nucleoside-2'-O-)-methyltransferase activity"/>
    <property type="evidence" value="ECO:0007669"/>
    <property type="project" value="InterPro"/>
</dbReference>
<dbReference type="GO" id="GO:0004482">
    <property type="term" value="F:mRNA 5'-cap (guanine-N7-)-methyltransferase activity"/>
    <property type="evidence" value="ECO:0007669"/>
    <property type="project" value="InterPro"/>
</dbReference>
<dbReference type="GO" id="GO:0008242">
    <property type="term" value="F:omega peptidase activity"/>
    <property type="evidence" value="ECO:0007669"/>
    <property type="project" value="InterPro"/>
</dbReference>
<dbReference type="GO" id="GO:0003724">
    <property type="term" value="F:RNA helicase activity"/>
    <property type="evidence" value="ECO:0007669"/>
    <property type="project" value="UniProtKB-EC"/>
</dbReference>
<dbReference type="GO" id="GO:0003968">
    <property type="term" value="F:RNA-directed RNA polymerase activity"/>
    <property type="evidence" value="ECO:0007669"/>
    <property type="project" value="UniProtKB-KW"/>
</dbReference>
<dbReference type="GO" id="GO:0003727">
    <property type="term" value="F:single-stranded RNA binding"/>
    <property type="evidence" value="ECO:0007669"/>
    <property type="project" value="InterPro"/>
</dbReference>
<dbReference type="GO" id="GO:0008270">
    <property type="term" value="F:zinc ion binding"/>
    <property type="evidence" value="ECO:0007669"/>
    <property type="project" value="UniProtKB-KW"/>
</dbReference>
<dbReference type="GO" id="GO:0006351">
    <property type="term" value="P:DNA-templated transcription"/>
    <property type="evidence" value="ECO:0007669"/>
    <property type="project" value="InterPro"/>
</dbReference>
<dbReference type="GO" id="GO:0006508">
    <property type="term" value="P:proteolysis"/>
    <property type="evidence" value="ECO:0007669"/>
    <property type="project" value="UniProtKB-KW"/>
</dbReference>
<dbReference type="GO" id="GO:0010506">
    <property type="term" value="P:regulation of autophagy"/>
    <property type="evidence" value="ECO:0007669"/>
    <property type="project" value="InterPro"/>
</dbReference>
<dbReference type="GO" id="GO:0039520">
    <property type="term" value="P:symbiont-mediated activation of host autophagy"/>
    <property type="evidence" value="ECO:0007669"/>
    <property type="project" value="UniProtKB-KW"/>
</dbReference>
<dbReference type="GO" id="GO:0039595">
    <property type="term" value="P:symbiont-mediated degradation of host mRNA"/>
    <property type="evidence" value="ECO:0007669"/>
    <property type="project" value="UniProtKB-KW"/>
</dbReference>
<dbReference type="GO" id="GO:0039648">
    <property type="term" value="P:symbiont-mediated perturbation of host ubiquitin-like protein modification"/>
    <property type="evidence" value="ECO:0007669"/>
    <property type="project" value="UniProtKB-KW"/>
</dbReference>
<dbReference type="GO" id="GO:0039657">
    <property type="term" value="P:symbiont-mediated suppression of host gene expression"/>
    <property type="evidence" value="ECO:0007669"/>
    <property type="project" value="UniProtKB-KW"/>
</dbReference>
<dbReference type="GO" id="GO:0039579">
    <property type="term" value="P:symbiont-mediated suppression of host ISG15-protein conjugation"/>
    <property type="evidence" value="ECO:0007669"/>
    <property type="project" value="UniProtKB-KW"/>
</dbReference>
<dbReference type="GO" id="GO:0085034">
    <property type="term" value="P:symbiont-mediated suppression of host NF-kappaB cascade"/>
    <property type="evidence" value="ECO:0007669"/>
    <property type="project" value="UniProtKB-KW"/>
</dbReference>
<dbReference type="GO" id="GO:0039502">
    <property type="term" value="P:symbiont-mediated suppression of host type I interferon-mediated signaling pathway"/>
    <property type="evidence" value="ECO:0007669"/>
    <property type="project" value="UniProtKB-KW"/>
</dbReference>
<dbReference type="GO" id="GO:0019079">
    <property type="term" value="P:viral genome replication"/>
    <property type="evidence" value="ECO:0007669"/>
    <property type="project" value="InterPro"/>
</dbReference>
<dbReference type="GO" id="GO:0019082">
    <property type="term" value="P:viral protein processing"/>
    <property type="evidence" value="ECO:0007669"/>
    <property type="project" value="InterPro"/>
</dbReference>
<dbReference type="GO" id="GO:0075523">
    <property type="term" value="P:viral translational frameshifting"/>
    <property type="evidence" value="ECO:0007669"/>
    <property type="project" value="UniProtKB-KW"/>
</dbReference>
<dbReference type="CDD" id="cd21409">
    <property type="entry name" value="1B_cv_Nsp13-like"/>
    <property type="match status" value="1"/>
</dbReference>
<dbReference type="CDD" id="cd21901">
    <property type="entry name" value="alpha_betaCoV_Nsp10"/>
    <property type="match status" value="1"/>
</dbReference>
<dbReference type="CDD" id="cd21560">
    <property type="entry name" value="betaCoV-Nsp6"/>
    <property type="match status" value="1"/>
</dbReference>
<dbReference type="CDD" id="cd21722">
    <property type="entry name" value="betaCoV_Nsp13-helicase"/>
    <property type="match status" value="1"/>
</dbReference>
<dbReference type="CDD" id="cd21659">
    <property type="entry name" value="betaCoV_Nsp14"/>
    <property type="match status" value="1"/>
</dbReference>
<dbReference type="CDD" id="cd21519">
    <property type="entry name" value="betaCoV_Nsp2_MHV-like"/>
    <property type="match status" value="1"/>
</dbReference>
<dbReference type="CDD" id="cd21666">
    <property type="entry name" value="betaCoV_Nsp5_Mpro"/>
    <property type="match status" value="1"/>
</dbReference>
<dbReference type="CDD" id="cd21827">
    <property type="entry name" value="betaCoV_Nsp7"/>
    <property type="match status" value="1"/>
</dbReference>
<dbReference type="CDD" id="cd21831">
    <property type="entry name" value="betaCoV_Nsp8"/>
    <property type="match status" value="1"/>
</dbReference>
<dbReference type="CDD" id="cd21898">
    <property type="entry name" value="betaCoV_Nsp9"/>
    <property type="match status" value="1"/>
</dbReference>
<dbReference type="CDD" id="cd21732">
    <property type="entry name" value="betaCoV_PLPro"/>
    <property type="match status" value="1"/>
</dbReference>
<dbReference type="CDD" id="cd23528">
    <property type="entry name" value="capping_2-OMTase_betaCoV_Nsp16"/>
    <property type="match status" value="1"/>
</dbReference>
<dbReference type="CDD" id="cd21473">
    <property type="entry name" value="cv_Nsp4_TM"/>
    <property type="match status" value="1"/>
</dbReference>
<dbReference type="CDD" id="cd21593">
    <property type="entry name" value="HCoV_HKU1-like_RdRp"/>
    <property type="match status" value="1"/>
</dbReference>
<dbReference type="CDD" id="cd21167">
    <property type="entry name" value="M_alpha_beta_cv_Nsp15-like"/>
    <property type="match status" value="1"/>
</dbReference>
<dbReference type="CDD" id="cd21557">
    <property type="entry name" value="Macro_X_Nsp3-like"/>
    <property type="match status" value="1"/>
</dbReference>
<dbReference type="CDD" id="cd21879">
    <property type="entry name" value="MHV-like_Nsp1"/>
    <property type="match status" value="1"/>
</dbReference>
<dbReference type="CDD" id="cd21812">
    <property type="entry name" value="MHV-like_Nsp3_betaSM"/>
    <property type="match status" value="1"/>
</dbReference>
<dbReference type="CDD" id="cd21824">
    <property type="entry name" value="MHV-like_Nsp3_NAB"/>
    <property type="match status" value="1"/>
</dbReference>
<dbReference type="CDD" id="cd21161">
    <property type="entry name" value="NendoU_cv_Nsp15-like"/>
    <property type="match status" value="1"/>
</dbReference>
<dbReference type="CDD" id="cd21171">
    <property type="entry name" value="NTD_alpha_betaCoV_Nsp15-like"/>
    <property type="match status" value="1"/>
</dbReference>
<dbReference type="CDD" id="cd21689">
    <property type="entry name" value="stalk_CoV_Nsp13-like"/>
    <property type="match status" value="1"/>
</dbReference>
<dbReference type="CDD" id="cd21714">
    <property type="entry name" value="TM_Y_MHV-like_Nsp3_C"/>
    <property type="match status" value="1"/>
</dbReference>
<dbReference type="CDD" id="cd21467">
    <property type="entry name" value="Ubl1_cv_Nsp3_N-like"/>
    <property type="match status" value="1"/>
</dbReference>
<dbReference type="CDD" id="cd21401">
    <property type="entry name" value="ZBD_cv_Nsp13-like"/>
    <property type="match status" value="1"/>
</dbReference>
<dbReference type="FunFam" id="1.10.150.420:FF:000001">
    <property type="entry name" value="Replicase polyprotein"/>
    <property type="match status" value="1"/>
</dbReference>
<dbReference type="Gene3D" id="1.10.8.1190">
    <property type="match status" value="2"/>
</dbReference>
<dbReference type="Gene3D" id="2.60.120.1680">
    <property type="match status" value="1"/>
</dbReference>
<dbReference type="Gene3D" id="3.10.20.350">
    <property type="match status" value="1"/>
</dbReference>
<dbReference type="Gene3D" id="3.10.20.540">
    <property type="match status" value="1"/>
</dbReference>
<dbReference type="Gene3D" id="3.40.50.11580">
    <property type="match status" value="1"/>
</dbReference>
<dbReference type="Gene3D" id="6.10.140.2090">
    <property type="match status" value="1"/>
</dbReference>
<dbReference type="Gene3D" id="1.10.150.420">
    <property type="entry name" value="Coronavirus nonstructural protein 4 C-terminus"/>
    <property type="match status" value="1"/>
</dbReference>
<dbReference type="Gene3D" id="3.40.220.10">
    <property type="entry name" value="Leucine Aminopeptidase, subunit E, domain 1"/>
    <property type="match status" value="1"/>
</dbReference>
<dbReference type="Gene3D" id="1.10.1840.10">
    <property type="entry name" value="main proteinase (3clpro) structure, domain 3"/>
    <property type="match status" value="1"/>
</dbReference>
<dbReference type="Gene3D" id="3.30.160.820">
    <property type="entry name" value="Nsp15 N-terminal domain-like"/>
    <property type="match status" value="1"/>
</dbReference>
<dbReference type="Gene3D" id="1.10.8.370">
    <property type="entry name" value="nsp7 replicase"/>
    <property type="match status" value="1"/>
</dbReference>
<dbReference type="Gene3D" id="3.30.70.3540">
    <property type="entry name" value="Nsp8 replicase, head domain"/>
    <property type="match status" value="1"/>
</dbReference>
<dbReference type="Gene3D" id="3.40.50.300">
    <property type="entry name" value="P-loop containing nucleotide triphosphate hydrolases"/>
    <property type="match status" value="2"/>
</dbReference>
<dbReference type="Gene3D" id="2.40.10.250">
    <property type="entry name" value="Replicase NSP9"/>
    <property type="match status" value="1"/>
</dbReference>
<dbReference type="Gene3D" id="3.40.50.11020">
    <property type="entry name" value="Replicase polyprotein, nucleic acid-binding domain"/>
    <property type="match status" value="1"/>
</dbReference>
<dbReference type="Gene3D" id="2.40.10.10">
    <property type="entry name" value="Trypsin-like serine proteases"/>
    <property type="match status" value="2"/>
</dbReference>
<dbReference type="Gene3D" id="3.40.50.150">
    <property type="entry name" value="Vaccinia Virus protein VP39"/>
    <property type="match status" value="1"/>
</dbReference>
<dbReference type="InterPro" id="IPR027351">
    <property type="entry name" value="(+)RNA_virus_helicase_core_dom"/>
</dbReference>
<dbReference type="InterPro" id="IPR046443">
    <property type="entry name" value="a/bCoV_NSP1_glob"/>
</dbReference>
<dbReference type="InterPro" id="IPR046440">
    <property type="entry name" value="AV_NSP11N_COV_NSP15M"/>
</dbReference>
<dbReference type="InterPro" id="IPR022570">
    <property type="entry name" value="B-CoV_A_NSP1"/>
</dbReference>
<dbReference type="InterPro" id="IPR046442">
    <property type="entry name" value="bCoV_NSP1_C"/>
</dbReference>
<dbReference type="InterPro" id="IPR050534">
    <property type="entry name" value="Coronavir_polyprotein_1ab"/>
</dbReference>
<dbReference type="InterPro" id="IPR043608">
    <property type="entry name" value="CoV_NSP15_M"/>
</dbReference>
<dbReference type="InterPro" id="IPR043606">
    <property type="entry name" value="CoV_NSP15_N"/>
</dbReference>
<dbReference type="InterPro" id="IPR043613">
    <property type="entry name" value="CoV_NSP2_C"/>
</dbReference>
<dbReference type="InterPro" id="IPR047573">
    <property type="entry name" value="CoV_NSP2_M"/>
</dbReference>
<dbReference type="InterPro" id="IPR049894">
    <property type="entry name" value="COV_NSP3_3ECTO"/>
</dbReference>
<dbReference type="InterPro" id="IPR043611">
    <property type="entry name" value="CoV_NSP3_C"/>
</dbReference>
<dbReference type="InterPro" id="IPR047566">
    <property type="entry name" value="CoV_NSP3_Y"/>
</dbReference>
<dbReference type="InterPro" id="IPR032505">
    <property type="entry name" value="CoV_NSP4_C"/>
</dbReference>
<dbReference type="InterPro" id="IPR043612">
    <property type="entry name" value="CoV_NSP4_N"/>
</dbReference>
<dbReference type="InterPro" id="IPR043502">
    <property type="entry name" value="DNA/RNA_pol_sf"/>
</dbReference>
<dbReference type="InterPro" id="IPR041679">
    <property type="entry name" value="DNA2/NAM7-like_C"/>
</dbReference>
<dbReference type="InterPro" id="IPR022733">
    <property type="entry name" value="DPUP_SUD_C_bCoV"/>
</dbReference>
<dbReference type="InterPro" id="IPR037227">
    <property type="entry name" value="EndoU-like"/>
</dbReference>
<dbReference type="InterPro" id="IPR002589">
    <property type="entry name" value="Macro_dom"/>
</dbReference>
<dbReference type="InterPro" id="IPR043472">
    <property type="entry name" value="Macro_dom-like"/>
</dbReference>
<dbReference type="InterPro" id="IPR044371">
    <property type="entry name" value="Macro_X_NSP3-like"/>
</dbReference>
<dbReference type="InterPro" id="IPR046435">
    <property type="entry name" value="N7_MTase_CoV"/>
</dbReference>
<dbReference type="InterPro" id="IPR043609">
    <property type="entry name" value="NendoU_nidovirus"/>
</dbReference>
<dbReference type="InterPro" id="IPR044863">
    <property type="entry name" value="NIRAN"/>
</dbReference>
<dbReference type="InterPro" id="IPR046438">
    <property type="entry name" value="NIV_2_O_MTASE"/>
</dbReference>
<dbReference type="InterPro" id="IPR046436">
    <property type="entry name" value="NIV_EXON"/>
</dbReference>
<dbReference type="InterPro" id="IPR036333">
    <property type="entry name" value="NSP10_sf_CoV"/>
</dbReference>
<dbReference type="InterPro" id="IPR047570">
    <property type="entry name" value="NSP12_IF_CoV"/>
</dbReference>
<dbReference type="InterPro" id="IPR044343">
    <property type="entry name" value="NSP13_1B_dom_CoV"/>
</dbReference>
<dbReference type="InterPro" id="IPR048673">
    <property type="entry name" value="NSP13_stalk_CoV"/>
</dbReference>
<dbReference type="InterPro" id="IPR048672">
    <property type="entry name" value="NSP13_ZBD_CoV"/>
</dbReference>
<dbReference type="InterPro" id="IPR027352">
    <property type="entry name" value="NSP13_ZBD_CoV-like"/>
</dbReference>
<dbReference type="InterPro" id="IPR044315">
    <property type="entry name" value="NSP14_betaCoV"/>
</dbReference>
<dbReference type="InterPro" id="IPR009466">
    <property type="entry name" value="NSP14_CoV"/>
</dbReference>
<dbReference type="InterPro" id="IPR044330">
    <property type="entry name" value="NSP15_alpha_betaCoV_N"/>
</dbReference>
<dbReference type="InterPro" id="IPR044322">
    <property type="entry name" value="NSP15_M_alpha_beta_CoV"/>
</dbReference>
<dbReference type="InterPro" id="IPR043174">
    <property type="entry name" value="NSP15_middle_sf"/>
</dbReference>
<dbReference type="InterPro" id="IPR042515">
    <property type="entry name" value="NSP15_N_CoV"/>
</dbReference>
<dbReference type="InterPro" id="IPR044401">
    <property type="entry name" value="NSP15_NendoU_CoV"/>
</dbReference>
<dbReference type="InterPro" id="IPR009461">
    <property type="entry name" value="NSP16_CoV-like"/>
</dbReference>
<dbReference type="InterPro" id="IPR044384">
    <property type="entry name" value="NSP2_MHV-like"/>
</dbReference>
<dbReference type="InterPro" id="IPR043615">
    <property type="entry name" value="NSP2_N_CoV"/>
</dbReference>
<dbReference type="InterPro" id="IPR044381">
    <property type="entry name" value="NSP3_DPUP_MHV"/>
</dbReference>
<dbReference type="InterPro" id="IPR047567">
    <property type="entry name" value="NSP3_G2M_bCoV"/>
</dbReference>
<dbReference type="InterPro" id="IPR032592">
    <property type="entry name" value="NSP3_NAB_bCoV"/>
</dbReference>
<dbReference type="InterPro" id="IPR042570">
    <property type="entry name" value="NSP3_NAB_bCoV_sf"/>
</dbReference>
<dbReference type="InterPro" id="IPR044357">
    <property type="entry name" value="NSP3_Ubl1_dom_CoV"/>
</dbReference>
<dbReference type="InterPro" id="IPR044353">
    <property type="entry name" value="Nsp3_Ubl2_dom_CoV"/>
</dbReference>
<dbReference type="InterPro" id="IPR038083">
    <property type="entry name" value="NSP3A-like"/>
</dbReference>
<dbReference type="InterPro" id="IPR038123">
    <property type="entry name" value="NSP4_C_sf_CoV"/>
</dbReference>
<dbReference type="InterPro" id="IPR044367">
    <property type="entry name" value="NSP6_betaCoV"/>
</dbReference>
<dbReference type="InterPro" id="IPR043610">
    <property type="entry name" value="NSP6_CoV"/>
</dbReference>
<dbReference type="InterPro" id="IPR014828">
    <property type="entry name" value="NSP7_CoV"/>
</dbReference>
<dbReference type="InterPro" id="IPR037204">
    <property type="entry name" value="NSP7_sf_CoV"/>
</dbReference>
<dbReference type="InterPro" id="IPR014829">
    <property type="entry name" value="NSP8_CoV"/>
</dbReference>
<dbReference type="InterPro" id="IPR037230">
    <property type="entry name" value="NSP8_sf_CoV"/>
</dbReference>
<dbReference type="InterPro" id="IPR014822">
    <property type="entry name" value="NSP9_CoV"/>
</dbReference>
<dbReference type="InterPro" id="IPR036499">
    <property type="entry name" value="NSP9_sf_CoV"/>
</dbReference>
<dbReference type="InterPro" id="IPR027417">
    <property type="entry name" value="P-loop_NTPase"/>
</dbReference>
<dbReference type="InterPro" id="IPR002705">
    <property type="entry name" value="Pept_C30/C16_B_coronavir"/>
</dbReference>
<dbReference type="InterPro" id="IPR013016">
    <property type="entry name" value="Peptidase_C16_CoV"/>
</dbReference>
<dbReference type="InterPro" id="IPR008740">
    <property type="entry name" value="Peptidase_C30_CoV"/>
</dbReference>
<dbReference type="InterPro" id="IPR043477">
    <property type="entry name" value="Peptidase_C30_dom3_CoV"/>
</dbReference>
<dbReference type="InterPro" id="IPR009003">
    <property type="entry name" value="Peptidase_S1_PA"/>
</dbReference>
<dbReference type="InterPro" id="IPR043504">
    <property type="entry name" value="Peptidase_S1_PA_chymotrypsin"/>
</dbReference>
<dbReference type="InterPro" id="IPR043177">
    <property type="entry name" value="PLpro_N_sf_CoV"/>
</dbReference>
<dbReference type="InterPro" id="IPR043503">
    <property type="entry name" value="PLpro_palm_finger_dom_CoV"/>
</dbReference>
<dbReference type="InterPro" id="IPR043178">
    <property type="entry name" value="PLpro_thumb_sf_CoV"/>
</dbReference>
<dbReference type="InterPro" id="IPR046441">
    <property type="entry name" value="RdRp_CoV"/>
</dbReference>
<dbReference type="InterPro" id="IPR044347">
    <property type="entry name" value="RdRp_HCoV_HKU1-like"/>
</dbReference>
<dbReference type="InterPro" id="IPR009469">
    <property type="entry name" value="RdRp_N_CoV"/>
</dbReference>
<dbReference type="InterPro" id="IPR001205">
    <property type="entry name" value="RNA-dir_pol_C"/>
</dbReference>
<dbReference type="InterPro" id="IPR018995">
    <property type="entry name" value="RNA_synth_NSP10_CoV"/>
</dbReference>
<dbReference type="InterPro" id="IPR029063">
    <property type="entry name" value="SAM-dependent_MTases_sf"/>
</dbReference>
<dbReference type="PANTHER" id="PTHR43788">
    <property type="entry name" value="DNA2/NAM7 HELICASE FAMILY MEMBER"/>
    <property type="match status" value="1"/>
</dbReference>
<dbReference type="PANTHER" id="PTHR43788:SF16">
    <property type="entry name" value="HELICASE WITH ZINC FINGER 2"/>
    <property type="match status" value="1"/>
</dbReference>
<dbReference type="Pfam" id="PF13087">
    <property type="entry name" value="AAA_12"/>
    <property type="match status" value="1"/>
</dbReference>
<dbReference type="Pfam" id="PF13604">
    <property type="entry name" value="AAA_30"/>
    <property type="match status" value="1"/>
</dbReference>
<dbReference type="Pfam" id="PF11963">
    <property type="entry name" value="B-CoV_A_NSP1"/>
    <property type="match status" value="1"/>
</dbReference>
<dbReference type="Pfam" id="PF16251">
    <property type="entry name" value="bCoV_NAB"/>
    <property type="match status" value="1"/>
</dbReference>
<dbReference type="Pfam" id="PF06471">
    <property type="entry name" value="CoV_ExoN"/>
    <property type="match status" value="1"/>
</dbReference>
<dbReference type="Pfam" id="PF06460">
    <property type="entry name" value="CoV_Methyltr_2"/>
    <property type="match status" value="1"/>
</dbReference>
<dbReference type="Pfam" id="PF09401">
    <property type="entry name" value="CoV_NSP10"/>
    <property type="match status" value="1"/>
</dbReference>
<dbReference type="Pfam" id="PF20631">
    <property type="entry name" value="CoV_NSP13_1B"/>
    <property type="match status" value="1"/>
</dbReference>
<dbReference type="Pfam" id="PF20633">
    <property type="entry name" value="CoV_NSP13_stalk"/>
    <property type="match status" value="1"/>
</dbReference>
<dbReference type="Pfam" id="PF20632">
    <property type="entry name" value="CoV_NSP13_ZBD"/>
    <property type="match status" value="1"/>
</dbReference>
<dbReference type="Pfam" id="PF19215">
    <property type="entry name" value="CoV_NSP15_C"/>
    <property type="match status" value="1"/>
</dbReference>
<dbReference type="Pfam" id="PF19216">
    <property type="entry name" value="CoV_NSP15_M"/>
    <property type="match status" value="1"/>
</dbReference>
<dbReference type="Pfam" id="PF19219">
    <property type="entry name" value="CoV_NSP15_N"/>
    <property type="match status" value="1"/>
</dbReference>
<dbReference type="Pfam" id="PF19218">
    <property type="entry name" value="CoV_NSP3_C"/>
    <property type="match status" value="1"/>
</dbReference>
<dbReference type="Pfam" id="PF16348">
    <property type="entry name" value="CoV_NSP4_C"/>
    <property type="match status" value="1"/>
</dbReference>
<dbReference type="Pfam" id="PF19217">
    <property type="entry name" value="CoV_NSP4_N"/>
    <property type="match status" value="1"/>
</dbReference>
<dbReference type="Pfam" id="PF19213">
    <property type="entry name" value="CoV_NSP6"/>
    <property type="match status" value="1"/>
</dbReference>
<dbReference type="Pfam" id="PF08716">
    <property type="entry name" value="CoV_NSP7"/>
    <property type="match status" value="1"/>
</dbReference>
<dbReference type="Pfam" id="PF08717">
    <property type="entry name" value="CoV_NSP8"/>
    <property type="match status" value="1"/>
</dbReference>
<dbReference type="Pfam" id="PF08710">
    <property type="entry name" value="CoV_NSP9"/>
    <property type="match status" value="1"/>
</dbReference>
<dbReference type="Pfam" id="PF08715">
    <property type="entry name" value="CoV_peptidase"/>
    <property type="match status" value="1"/>
</dbReference>
<dbReference type="Pfam" id="PF06478">
    <property type="entry name" value="CoV_RPol_N"/>
    <property type="match status" value="1"/>
</dbReference>
<dbReference type="Pfam" id="PF01661">
    <property type="entry name" value="Macro"/>
    <property type="match status" value="1"/>
</dbReference>
<dbReference type="Pfam" id="PF22104">
    <property type="entry name" value="MHV_Nsp3_DPUP"/>
    <property type="match status" value="1"/>
</dbReference>
<dbReference type="Pfam" id="PF01831">
    <property type="entry name" value="Peptidase_C16"/>
    <property type="match status" value="1"/>
</dbReference>
<dbReference type="Pfam" id="PF05409">
    <property type="entry name" value="Peptidase_C30"/>
    <property type="match status" value="1"/>
</dbReference>
<dbReference type="Pfam" id="PF00680">
    <property type="entry name" value="RdRP_1"/>
    <property type="match status" value="1"/>
</dbReference>
<dbReference type="SMART" id="SM00506">
    <property type="entry name" value="A1pp"/>
    <property type="match status" value="1"/>
</dbReference>
<dbReference type="SUPFAM" id="SSF144246">
    <property type="entry name" value="Coronavirus NSP10-like"/>
    <property type="match status" value="1"/>
</dbReference>
<dbReference type="SUPFAM" id="SSF140367">
    <property type="entry name" value="Coronavirus NSP7-like"/>
    <property type="match status" value="1"/>
</dbReference>
<dbReference type="SUPFAM" id="SSF143076">
    <property type="entry name" value="Coronavirus NSP8-like"/>
    <property type="match status" value="1"/>
</dbReference>
<dbReference type="SUPFAM" id="SSF56672">
    <property type="entry name" value="DNA/RNA polymerases"/>
    <property type="match status" value="1"/>
</dbReference>
<dbReference type="SUPFAM" id="SSF142877">
    <property type="entry name" value="EndoU-like"/>
    <property type="match status" value="1"/>
</dbReference>
<dbReference type="SUPFAM" id="SSF52949">
    <property type="entry name" value="Macro domain-like"/>
    <property type="match status" value="1"/>
</dbReference>
<dbReference type="SUPFAM" id="SSF159936">
    <property type="entry name" value="NSP3A-like"/>
    <property type="match status" value="1"/>
</dbReference>
<dbReference type="SUPFAM" id="SSF52540">
    <property type="entry name" value="P-loop containing nucleoside triphosphate hydrolases"/>
    <property type="match status" value="1"/>
</dbReference>
<dbReference type="SUPFAM" id="SSF101816">
    <property type="entry name" value="Replicase NSP9"/>
    <property type="match status" value="1"/>
</dbReference>
<dbReference type="SUPFAM" id="SSF53335">
    <property type="entry name" value="S-adenosyl-L-methionine-dependent methyltransferases"/>
    <property type="match status" value="1"/>
</dbReference>
<dbReference type="SUPFAM" id="SSF50494">
    <property type="entry name" value="Trypsin-like serine proteases"/>
    <property type="match status" value="1"/>
</dbReference>
<dbReference type="PROSITE" id="PS51961">
    <property type="entry name" value="AV_NSP11N_COV_NSP15M"/>
    <property type="match status" value="1"/>
</dbReference>
<dbReference type="PROSITE" id="PS51963">
    <property type="entry name" value="BCOV_NSP1_C"/>
    <property type="match status" value="1"/>
</dbReference>
<dbReference type="PROSITE" id="PS51942">
    <property type="entry name" value="BCOV_NSP3C_C"/>
    <property type="match status" value="1"/>
</dbReference>
<dbReference type="PROSITE" id="PS51994">
    <property type="entry name" value="BCOV_NSP3E_G2M"/>
    <property type="match status" value="1"/>
</dbReference>
<dbReference type="PROSITE" id="PS51945">
    <property type="entry name" value="BCOV_NSP3E_NAB"/>
    <property type="match status" value="1"/>
</dbReference>
<dbReference type="PROSITE" id="PS51993">
    <property type="entry name" value="COV_3ECTO"/>
    <property type="match status" value="1"/>
</dbReference>
<dbReference type="PROSITE" id="PS51952">
    <property type="entry name" value="COV_EXON_MTASE_COACT"/>
    <property type="match status" value="1"/>
</dbReference>
<dbReference type="PROSITE" id="PS51954">
    <property type="entry name" value="COV_N7_MTASE"/>
    <property type="match status" value="1"/>
</dbReference>
<dbReference type="PROSITE" id="PS51962">
    <property type="entry name" value="COV_NSP1"/>
    <property type="match status" value="1"/>
</dbReference>
<dbReference type="PROSITE" id="PS52000">
    <property type="entry name" value="COV_NSP12_IF"/>
    <property type="match status" value="1"/>
</dbReference>
<dbReference type="PROSITE" id="PS51948">
    <property type="entry name" value="COV_NSP12_RDRP"/>
    <property type="match status" value="1"/>
</dbReference>
<dbReference type="PROSITE" id="PS51960">
    <property type="entry name" value="COV_NSP15_NTD"/>
    <property type="match status" value="1"/>
</dbReference>
<dbReference type="PROSITE" id="PS51991">
    <property type="entry name" value="COV_NSP2_C"/>
    <property type="match status" value="1"/>
</dbReference>
<dbReference type="PROSITE" id="PS51990">
    <property type="entry name" value="COV_NSP2_M"/>
    <property type="match status" value="1"/>
</dbReference>
<dbReference type="PROSITE" id="PS51989">
    <property type="entry name" value="COV_NSP2_N"/>
    <property type="match status" value="1"/>
</dbReference>
<dbReference type="PROSITE" id="PS51992">
    <property type="entry name" value="COV_NSP3_Y"/>
    <property type="match status" value="1"/>
</dbReference>
<dbReference type="PROSITE" id="PS51943">
    <property type="entry name" value="COV_NSP3A_UBL"/>
    <property type="match status" value="1"/>
</dbReference>
<dbReference type="PROSITE" id="PS51944">
    <property type="entry name" value="COV_NSP3D_UBL"/>
    <property type="match status" value="1"/>
</dbReference>
<dbReference type="PROSITE" id="PS51946">
    <property type="entry name" value="COV_NSP4C"/>
    <property type="match status" value="1"/>
</dbReference>
<dbReference type="PROSITE" id="PS51949">
    <property type="entry name" value="COV_NSP7"/>
    <property type="match status" value="1"/>
</dbReference>
<dbReference type="PROSITE" id="PS51950">
    <property type="entry name" value="COV_NSP8"/>
    <property type="match status" value="1"/>
</dbReference>
<dbReference type="PROSITE" id="PS51951">
    <property type="entry name" value="COV_NSP9_SSRNA_BD"/>
    <property type="match status" value="1"/>
</dbReference>
<dbReference type="PROSITE" id="PS51653">
    <property type="entry name" value="CV_ZBD"/>
    <property type="match status" value="1"/>
</dbReference>
<dbReference type="PROSITE" id="PS51442">
    <property type="entry name" value="M_PRO"/>
    <property type="match status" value="1"/>
</dbReference>
<dbReference type="PROSITE" id="PS51154">
    <property type="entry name" value="MACRO"/>
    <property type="match status" value="1"/>
</dbReference>
<dbReference type="PROSITE" id="PS51958">
    <property type="entry name" value="NENDOU"/>
    <property type="match status" value="1"/>
</dbReference>
<dbReference type="PROSITE" id="PS51947">
    <property type="entry name" value="NIRAN"/>
    <property type="match status" value="1"/>
</dbReference>
<dbReference type="PROSITE" id="PS51955">
    <property type="entry name" value="NIV_2_O_MTASE"/>
    <property type="match status" value="1"/>
</dbReference>
<dbReference type="PROSITE" id="PS51953">
    <property type="entry name" value="NIV_EXON"/>
    <property type="match status" value="1"/>
</dbReference>
<dbReference type="PROSITE" id="PS51124">
    <property type="entry name" value="PEPTIDASE_C16"/>
    <property type="match status" value="2"/>
</dbReference>
<dbReference type="PROSITE" id="PS51657">
    <property type="entry name" value="PSRV_HELICASE"/>
    <property type="match status" value="1"/>
</dbReference>
<proteinExistence type="inferred from homology"/>
<keyword id="KW-1072">Activation of host autophagy by virus</keyword>
<keyword id="KW-0067">ATP-binding</keyword>
<keyword id="KW-1132">Decay of host mRNAs by virus</keyword>
<keyword id="KW-1015">Disulfide bond</keyword>
<keyword id="KW-0255">Endonuclease</keyword>
<keyword id="KW-1262">Eukaryotic host gene expression shutoff by virus</keyword>
<keyword id="KW-1193">Eukaryotic host translation shutoff by virus</keyword>
<keyword id="KW-0269">Exonuclease</keyword>
<keyword id="KW-0347">Helicase</keyword>
<keyword id="KW-1035">Host cytoplasm</keyword>
<keyword id="KW-1190">Host gene expression shutoff by virus</keyword>
<keyword id="KW-1043">Host membrane</keyword>
<keyword id="KW-1192">Host mRNA suppression by virus</keyword>
<keyword id="KW-0945">Host-virus interaction</keyword>
<keyword id="KW-0378">Hydrolase</keyword>
<keyword id="KW-1090">Inhibition of host innate immune response by virus</keyword>
<keyword id="KW-1114">Inhibition of host interferon signaling pathway by virus</keyword>
<keyword id="KW-1095">Inhibition of host ISG15 by virus</keyword>
<keyword id="KW-1100">Inhibition of host NF-kappa-B by virus</keyword>
<keyword id="KW-0922">Interferon antiviral system evasion</keyword>
<keyword id="KW-0456">Lyase</keyword>
<keyword id="KW-0464">Manganese</keyword>
<keyword id="KW-0472">Membrane</keyword>
<keyword id="KW-0479">Metal-binding</keyword>
<keyword id="KW-0489">Methyltransferase</keyword>
<keyword id="KW-1127">Modulation of host ubiquitin pathway by viral deubiquitinase</keyword>
<keyword id="KW-1130">Modulation of host ubiquitin pathway by virus</keyword>
<keyword id="KW-0540">Nuclease</keyword>
<keyword id="KW-0547">Nucleotide-binding</keyword>
<keyword id="KW-0548">Nucleotidyltransferase</keyword>
<keyword id="KW-0645">Protease</keyword>
<keyword id="KW-0677">Repeat</keyword>
<keyword id="KW-0688">Ribosomal frameshifting</keyword>
<keyword id="KW-0694">RNA-binding</keyword>
<keyword id="KW-0696">RNA-directed RNA polymerase</keyword>
<keyword id="KW-0788">Thiol protease</keyword>
<keyword id="KW-0808">Transferase</keyword>
<keyword id="KW-0812">Transmembrane</keyword>
<keyword id="KW-1133">Transmembrane helix</keyword>
<keyword id="KW-0833">Ubl conjugation pathway</keyword>
<keyword id="KW-0899">Viral immunoevasion</keyword>
<keyword id="KW-0693">Viral RNA replication</keyword>
<keyword id="KW-0862">Zinc</keyword>
<keyword id="KW-0863">Zinc-finger</keyword>
<name>R1AB_CVHN2</name>
<gene>
    <name type="primary">rep</name>
    <name type="ORF">1a-1b</name>
</gene>
<feature type="chain" id="PRO_0000297773" description="Host translation inhibitor nsp1" evidence="2">
    <location>
        <begin position="1"/>
        <end position="222"/>
    </location>
</feature>
<feature type="chain" id="PRO_0000297774" description="Non-structural protein 2" evidence="2">
    <location>
        <begin position="223"/>
        <end position="809"/>
    </location>
</feature>
<feature type="chain" id="PRO_0000297775" description="Papain-like proteinase nsp3" evidence="2">
    <location>
        <begin position="810"/>
        <end position="2808"/>
    </location>
</feature>
<feature type="chain" id="PRO_0000297776" description="Non-structural protein 4" evidence="2">
    <location>
        <begin position="2809"/>
        <end position="3304"/>
    </location>
</feature>
<feature type="chain" id="PRO_0000297777" description="3C-like proteinase nsp5" evidence="2">
    <location>
        <begin position="3305"/>
        <end position="3607"/>
    </location>
</feature>
<feature type="chain" id="PRO_0000297778" description="Non-structural protein 6" evidence="2">
    <location>
        <begin position="3608"/>
        <end position="3894"/>
    </location>
</feature>
<feature type="chain" id="PRO_0000297779" description="Non-structural protein 7" evidence="2">
    <location>
        <begin position="3895"/>
        <end position="3986"/>
    </location>
</feature>
<feature type="chain" id="PRO_0000297780" description="Non-structural protein 8" evidence="2">
    <location>
        <begin position="3987"/>
        <end position="4180"/>
    </location>
</feature>
<feature type="chain" id="PRO_0000297781" description="Viral protein genome-linked nsp9" evidence="2">
    <location>
        <begin position="4181"/>
        <end position="4290"/>
    </location>
</feature>
<feature type="chain" id="PRO_0000297782" description="Non-structural protein 10" evidence="2">
    <location>
        <begin position="4291"/>
        <end position="4427"/>
    </location>
</feature>
<feature type="chain" id="PRO_0000297783" description="RNA-directed RNA polymerase nsp12" evidence="2">
    <location>
        <begin position="4428"/>
        <end position="5355"/>
    </location>
</feature>
<feature type="chain" id="PRO_0000297784" description="Helicase nsp13" evidence="2">
    <location>
        <begin position="5356"/>
        <end position="5958"/>
    </location>
</feature>
<feature type="chain" id="PRO_0000297785" description="Guanine-N7 methyltransferase nsp14" evidence="2">
    <location>
        <begin position="5959"/>
        <end position="6479"/>
    </location>
</feature>
<feature type="chain" id="PRO_0000297786" description="Uridylate-specific endoribonuclease nsp15" evidence="2">
    <location>
        <begin position="6480"/>
        <end position="6853"/>
    </location>
</feature>
<feature type="chain" id="PRO_0000297787" description="2'-O-methyltransferase nsp16" evidence="2">
    <location>
        <begin position="6854"/>
        <end position="7152"/>
    </location>
</feature>
<feature type="transmembrane region" description="Helical" evidence="4">
    <location>
        <begin position="2196"/>
        <end position="2216"/>
    </location>
</feature>
<feature type="transmembrane region" description="Helical" evidence="4">
    <location>
        <begin position="2257"/>
        <end position="2277"/>
    </location>
</feature>
<feature type="transmembrane region" description="Helical" evidence="4">
    <location>
        <begin position="2288"/>
        <end position="2308"/>
    </location>
</feature>
<feature type="transmembrane region" description="Helical" evidence="4">
    <location>
        <begin position="2371"/>
        <end position="2391"/>
    </location>
</feature>
<feature type="transmembrane region" description="Helical" evidence="4">
    <location>
        <begin position="2413"/>
        <end position="2433"/>
    </location>
</feature>
<feature type="transmembrane region" description="Helical" evidence="4">
    <location>
        <begin position="2814"/>
        <end position="2834"/>
    </location>
</feature>
<feature type="transmembrane region" description="Helical" evidence="4">
    <location>
        <begin position="3089"/>
        <end position="3109"/>
    </location>
</feature>
<feature type="transmembrane region" description="Helical" evidence="4">
    <location>
        <begin position="3121"/>
        <end position="3141"/>
    </location>
</feature>
<feature type="transmembrane region" description="Helical" evidence="4">
    <location>
        <begin position="3148"/>
        <end position="3168"/>
    </location>
</feature>
<feature type="transmembrane region" description="Helical" evidence="4">
    <location>
        <begin position="3173"/>
        <end position="3193"/>
    </location>
</feature>
<feature type="transmembrane region" description="Helical" evidence="4">
    <location>
        <begin position="3621"/>
        <end position="3641"/>
    </location>
</feature>
<feature type="transmembrane region" description="Helical" evidence="4">
    <location>
        <begin position="3646"/>
        <end position="3666"/>
    </location>
</feature>
<feature type="transmembrane region" description="Helical" evidence="4">
    <location>
        <begin position="3671"/>
        <end position="3691"/>
    </location>
</feature>
<feature type="transmembrane region" description="Helical" evidence="4">
    <location>
        <begin position="3714"/>
        <end position="3734"/>
    </location>
</feature>
<feature type="transmembrane region" description="Helical" evidence="4">
    <location>
        <begin position="3742"/>
        <end position="3762"/>
    </location>
</feature>
<feature type="transmembrane region" description="Helical" evidence="4">
    <location>
        <begin position="3770"/>
        <end position="3790"/>
    </location>
</feature>
<feature type="transmembrane region" description="Helical" evidence="4">
    <location>
        <begin position="3813"/>
        <end position="3833"/>
    </location>
</feature>
<feature type="domain" description="CoV Nsp1 globular" evidence="25">
    <location>
        <begin position="54"/>
        <end position="174"/>
    </location>
</feature>
<feature type="domain" description="BetaCoV Nsp1 C-terminal" evidence="26">
    <location>
        <begin position="192"/>
        <end position="222"/>
    </location>
</feature>
<feature type="domain" description="CoV Nsp2 N-terminal" evidence="27">
    <location>
        <begin position="226"/>
        <end position="488"/>
    </location>
</feature>
<feature type="domain" description="CoV Nsp2 middle" evidence="28">
    <location>
        <begin position="493"/>
        <end position="681"/>
    </location>
</feature>
<feature type="domain" description="CoV Nsp2 C-terminal" evidence="29">
    <location>
        <begin position="697"/>
        <end position="809"/>
    </location>
</feature>
<feature type="domain" description="Ubiquitin-like 1" evidence="5">
    <location>
        <begin position="811"/>
        <end position="923"/>
    </location>
</feature>
<feature type="repeat" description="1">
    <location>
        <begin position="945"/>
        <end position="954"/>
    </location>
</feature>
<feature type="repeat" description="2">
    <location>
        <begin position="955"/>
        <end position="964"/>
    </location>
</feature>
<feature type="repeat" description="3">
    <location>
        <begin position="965"/>
        <end position="974"/>
    </location>
</feature>
<feature type="repeat" description="4">
    <location>
        <begin position="975"/>
        <end position="984"/>
    </location>
</feature>
<feature type="repeat" description="5">
    <location>
        <begin position="985"/>
        <end position="994"/>
    </location>
</feature>
<feature type="repeat" description="6">
    <location>
        <begin position="995"/>
        <end position="1004"/>
    </location>
</feature>
<feature type="repeat" description="7">
    <location>
        <begin position="1005"/>
        <end position="1014"/>
    </location>
</feature>
<feature type="repeat" description="8">
    <location>
        <begin position="1015"/>
        <end position="1024"/>
    </location>
</feature>
<feature type="repeat" description="9">
    <location>
        <begin position="1025"/>
        <end position="1034"/>
    </location>
</feature>
<feature type="repeat" description="10">
    <location>
        <begin position="1035"/>
        <end position="1044"/>
    </location>
</feature>
<feature type="repeat" description="11">
    <location>
        <begin position="1045"/>
        <end position="1054"/>
    </location>
</feature>
<feature type="domain" description="Peptidase C16 1" evidence="6">
    <location>
        <begin position="1093"/>
        <end position="1343"/>
    </location>
</feature>
<feature type="domain" description="Macro" evidence="7">
    <location>
        <begin position="1321"/>
        <end position="1492"/>
    </location>
</feature>
<feature type="domain" description="DPUP" evidence="10">
    <location>
        <begin position="1548"/>
        <end position="1619"/>
    </location>
</feature>
<feature type="domain" description="Ubiquitin-like 2" evidence="5">
    <location>
        <begin position="1619"/>
        <end position="1674"/>
    </location>
</feature>
<feature type="domain" description="Peptidase C16 2" evidence="6">
    <location>
        <begin position="1688"/>
        <end position="1948"/>
    </location>
</feature>
<feature type="domain" description="Nucleic acid-binding" evidence="11">
    <location>
        <begin position="1962"/>
        <end position="2063"/>
    </location>
</feature>
<feature type="domain" description="G2M" evidence="32">
    <location>
        <begin position="2078"/>
        <end position="2227"/>
    </location>
</feature>
<feature type="domain" description="3Ecto" evidence="31">
    <location>
        <begin position="2293"/>
        <end position="2354"/>
    </location>
</feature>
<feature type="domain" description="CoV Nsp3 Y" evidence="30">
    <location>
        <begin position="2441"/>
        <end position="2808"/>
    </location>
</feature>
<feature type="domain" description="Nsp4C" evidence="12">
    <location>
        <begin position="3207"/>
        <end position="3304"/>
    </location>
</feature>
<feature type="domain" description="Peptidase C30" evidence="8">
    <location>
        <begin position="3305"/>
        <end position="3607"/>
    </location>
</feature>
<feature type="domain" description="RdRp Nsp7 cofactor" evidence="15">
    <location>
        <begin position="3895"/>
        <end position="3983"/>
    </location>
</feature>
<feature type="domain" description="RdRp Nsp8 cofactor" evidence="16">
    <location>
        <begin position="3984"/>
        <end position="4180"/>
    </location>
</feature>
<feature type="domain" description="Nsp9 ssRNA-binding" evidence="17">
    <location>
        <begin position="4181"/>
        <end position="4290"/>
    </location>
</feature>
<feature type="domain" description="ExoN/MTase coactivator" evidence="18">
    <location>
        <begin position="4291"/>
        <end position="4428"/>
    </location>
</feature>
<feature type="domain" description="NiRAN" evidence="13">
    <location>
        <begin position="4433"/>
        <end position="4688"/>
    </location>
</feature>
<feature type="domain" description="Nsp12 Interface" evidence="33">
    <location>
        <begin position="4689"/>
        <end position="4787"/>
    </location>
</feature>
<feature type="domain" description="Nsp12 RNA-dependent RNA polymerase" evidence="14">
    <location>
        <begin position="4788"/>
        <end position="5355"/>
    </location>
</feature>
<feature type="domain" description="RdRp catalytic">
    <location>
        <begin position="5035"/>
        <end position="5197"/>
    </location>
</feature>
<feature type="domain" description="CV ZBD" evidence="9">
    <location>
        <begin position="5356"/>
        <end position="5468"/>
    </location>
</feature>
<feature type="domain" description="(+)RNA virus helicase ATP-binding">
    <location>
        <begin position="5611"/>
        <end position="5792"/>
    </location>
</feature>
<feature type="domain" description="(+)RNA virus helicase C-terminal">
    <location>
        <begin position="5793"/>
        <end position="5962"/>
    </location>
</feature>
<feature type="domain" description="ExoN" evidence="19">
    <location>
        <begin position="6029"/>
        <end position="6244"/>
    </location>
</feature>
<feature type="domain" description="N7-MTase" evidence="20">
    <location>
        <begin position="6253"/>
        <end position="6479"/>
    </location>
</feature>
<feature type="domain" description="Nsp15 N-terminal oligomerization" evidence="23">
    <location>
        <begin position="6480"/>
        <end position="6540"/>
    </location>
</feature>
<feature type="domain" description="AV-Nsp11N/CoV-Nsp15M" evidence="24">
    <location>
        <begin position="6541"/>
        <end position="6661"/>
    </location>
</feature>
<feature type="domain" description="NendoU" evidence="22">
    <location>
        <begin position="6711"/>
        <end position="6850"/>
    </location>
</feature>
<feature type="domain" description="Nidovirus-type SAM-dependent 2'-O-MTase" evidence="21">
    <location>
        <begin position="6855"/>
        <end position="7149"/>
    </location>
</feature>
<feature type="zinc finger region" description="C4-type 1" evidence="6">
    <location>
        <begin position="1208"/>
        <end position="1236"/>
    </location>
</feature>
<feature type="zinc finger region" description="C4-type 2" evidence="6">
    <location>
        <begin position="1805"/>
        <end position="1841"/>
    </location>
</feature>
<feature type="zinc finger region" evidence="1">
    <location>
        <begin position="4364"/>
        <end position="4380"/>
    </location>
</feature>
<feature type="zinc finger region" evidence="1">
    <location>
        <begin position="4406"/>
        <end position="4419"/>
    </location>
</feature>
<feature type="region of interest" description="C4" evidence="27">
    <location>
        <begin position="365"/>
        <end position="389"/>
    </location>
</feature>
<feature type="region of interest" description="11 X 10 AA tandem repeat of N-[DN]-D-E-D-V-V-T-G-D">
    <location>
        <begin position="945"/>
        <end position="1054"/>
    </location>
</feature>
<feature type="region of interest" description="Disordered" evidence="34">
    <location>
        <begin position="947"/>
        <end position="1036"/>
    </location>
</feature>
<feature type="region of interest" description="HD1" evidence="1">
    <location>
        <begin position="2196"/>
        <end position="2433"/>
    </location>
</feature>
<feature type="region of interest" description="Y1" evidence="30">
    <location>
        <begin position="2441"/>
        <end position="2531"/>
    </location>
</feature>
<feature type="region of interest" description="ZF1" evidence="30">
    <location>
        <begin position="2445"/>
        <end position="2458"/>
    </location>
</feature>
<feature type="region of interest" description="ZF2" evidence="30">
    <location>
        <begin position="2491"/>
        <end position="2501"/>
    </location>
</feature>
<feature type="region of interest" description="CoV-Y" evidence="30">
    <location>
        <begin position="2532"/>
        <end position="2808"/>
    </location>
</feature>
<feature type="region of interest" description="Y2" evidence="30">
    <location>
        <begin position="2532"/>
        <end position="2624"/>
    </location>
</feature>
<feature type="region of interest" description="Y3" evidence="30">
    <location>
        <begin position="2625"/>
        <end position="2707"/>
    </location>
</feature>
<feature type="region of interest" description="Y4" evidence="30">
    <location>
        <begin position="2708"/>
        <end position="2808"/>
    </location>
</feature>
<feature type="region of interest" description="HD2" evidence="1">
    <location>
        <begin position="2814"/>
        <end position="3193"/>
    </location>
</feature>
<feature type="region of interest" description="HD3" evidence="1">
    <location>
        <begin position="3621"/>
        <end position="3833"/>
    </location>
</feature>
<feature type="region of interest" description="RdRp Fingers N-ter" evidence="14">
    <location>
        <begin position="4790"/>
        <end position="5004"/>
    </location>
</feature>
<feature type="region of interest" description="RdRp Palm N-ter" evidence="14">
    <location>
        <begin position="5005"/>
        <end position="5043"/>
    </location>
</feature>
<feature type="region of interest" description="RdRp Fingers C-ter" evidence="14">
    <location>
        <begin position="5044"/>
        <end position="5102"/>
    </location>
</feature>
<feature type="region of interest" description="RdRp Palm C-ter" evidence="14">
    <location>
        <begin position="5103"/>
        <end position="5238"/>
    </location>
</feature>
<feature type="region of interest" description="RdRp Thumb" evidence="14">
    <location>
        <begin position="5239"/>
        <end position="5355"/>
    </location>
</feature>
<feature type="region of interest" description="GpppA-binding" evidence="20">
    <location>
        <begin position="6366"/>
        <end position="6380"/>
    </location>
</feature>
<feature type="active site" description="For PL1-PRO activity" evidence="6">
    <location>
        <position position="1131"/>
    </location>
</feature>
<feature type="active site" description="For PL1-PRO activity" evidence="6">
    <location>
        <position position="1282"/>
    </location>
</feature>
<feature type="active site" description="For PL1-PRO activity" evidence="6">
    <location>
        <position position="1293"/>
    </location>
</feature>
<feature type="active site" description="For PL2-PRO activity" evidence="6">
    <location>
        <position position="1727"/>
    </location>
</feature>
<feature type="active site" description="For PL2-PRO activity" evidence="6">
    <location>
        <position position="1884"/>
    </location>
</feature>
<feature type="active site" description="For PL2-PRO activity" evidence="6">
    <location>
        <position position="1898"/>
    </location>
</feature>
<feature type="active site" description="For 3CL-PRO activity" evidence="8">
    <location>
        <position position="3345"/>
    </location>
</feature>
<feature type="active site" description="For 3CL-PRO activity" evidence="8">
    <location>
        <position position="3449"/>
    </location>
</feature>
<feature type="active site" evidence="14">
    <location>
        <position position="5182"/>
    </location>
</feature>
<feature type="active site" evidence="14">
    <location>
        <position position="5183"/>
    </location>
</feature>
<feature type="active site" evidence="14">
    <location>
        <position position="5184"/>
    </location>
</feature>
<feature type="active site" evidence="19">
    <location>
        <position position="6047"/>
    </location>
</feature>
<feature type="active site" evidence="19">
    <location>
        <position position="6049"/>
    </location>
</feature>
<feature type="active site" evidence="19">
    <location>
        <position position="6148"/>
    </location>
</feature>
<feature type="active site" evidence="19">
    <location>
        <position position="6225"/>
    </location>
</feature>
<feature type="active site" evidence="19">
    <location>
        <position position="6230"/>
    </location>
</feature>
<feature type="active site" evidence="22">
    <location>
        <position position="6741"/>
    </location>
</feature>
<feature type="active site" evidence="22">
    <location>
        <position position="6756"/>
    </location>
</feature>
<feature type="active site" evidence="22">
    <location>
        <position position="6796"/>
    </location>
</feature>
<feature type="active site" evidence="21">
    <location>
        <position position="6899"/>
    </location>
</feature>
<feature type="active site" evidence="21">
    <location>
        <position position="6983"/>
    </location>
</feature>
<feature type="active site" evidence="21">
    <location>
        <position position="7023"/>
    </location>
</feature>
<feature type="active site" evidence="21">
    <location>
        <position position="7056"/>
    </location>
</feature>
<feature type="binding site" evidence="27">
    <location>
        <position position="365"/>
    </location>
    <ligand>
        <name>Zn(2+)</name>
        <dbReference type="ChEBI" id="CHEBI:29105"/>
        <label>1</label>
    </ligand>
</feature>
<feature type="binding site" evidence="27">
    <location>
        <position position="370"/>
    </location>
    <ligand>
        <name>Zn(2+)</name>
        <dbReference type="ChEBI" id="CHEBI:29105"/>
        <label>1</label>
    </ligand>
</feature>
<feature type="binding site" evidence="27">
    <location>
        <position position="386"/>
    </location>
    <ligand>
        <name>Zn(2+)</name>
        <dbReference type="ChEBI" id="CHEBI:29105"/>
        <label>1</label>
    </ligand>
</feature>
<feature type="binding site" evidence="27">
    <location>
        <position position="389"/>
    </location>
    <ligand>
        <name>Zn(2+)</name>
        <dbReference type="ChEBI" id="CHEBI:29105"/>
        <label>1</label>
    </ligand>
</feature>
<feature type="binding site" evidence="6">
    <location>
        <position position="1208"/>
    </location>
    <ligand>
        <name>Zn(2+)</name>
        <dbReference type="ChEBI" id="CHEBI:29105"/>
        <label>2</label>
    </ligand>
</feature>
<feature type="binding site" evidence="6">
    <location>
        <position position="1211"/>
    </location>
    <ligand>
        <name>Zn(2+)</name>
        <dbReference type="ChEBI" id="CHEBI:29105"/>
        <label>2</label>
    </ligand>
</feature>
<feature type="binding site" evidence="6">
    <location>
        <position position="1234"/>
    </location>
    <ligand>
        <name>Zn(2+)</name>
        <dbReference type="ChEBI" id="CHEBI:29105"/>
        <label>2</label>
    </ligand>
</feature>
<feature type="binding site" evidence="6">
    <location>
        <position position="1236"/>
    </location>
    <ligand>
        <name>Zn(2+)</name>
        <dbReference type="ChEBI" id="CHEBI:29105"/>
        <label>2</label>
    </ligand>
</feature>
<feature type="binding site" evidence="6">
    <location>
        <position position="1805"/>
    </location>
    <ligand>
        <name>Zn(2+)</name>
        <dbReference type="ChEBI" id="CHEBI:29105"/>
        <label>3</label>
    </ligand>
</feature>
<feature type="binding site" evidence="6">
    <location>
        <position position="1807"/>
    </location>
    <ligand>
        <name>Zn(2+)</name>
        <dbReference type="ChEBI" id="CHEBI:29105"/>
        <label>3</label>
    </ligand>
</feature>
<feature type="binding site" evidence="6">
    <location>
        <position position="1839"/>
    </location>
    <ligand>
        <name>Zn(2+)</name>
        <dbReference type="ChEBI" id="CHEBI:29105"/>
        <label>3</label>
    </ligand>
</feature>
<feature type="binding site" evidence="6">
    <location>
        <position position="1841"/>
    </location>
    <ligand>
        <name>Zn(2+)</name>
        <dbReference type="ChEBI" id="CHEBI:29105"/>
        <label>3</label>
    </ligand>
</feature>
<feature type="binding site" evidence="30">
    <location>
        <position position="2445"/>
    </location>
    <ligand>
        <name>Zn(2+)</name>
        <dbReference type="ChEBI" id="CHEBI:29105"/>
        <label>4</label>
    </ligand>
</feature>
<feature type="binding site" evidence="30">
    <location>
        <position position="2450"/>
    </location>
    <ligand>
        <name>Zn(2+)</name>
        <dbReference type="ChEBI" id="CHEBI:29105"/>
        <label>4</label>
    </ligand>
</feature>
<feature type="binding site" evidence="30">
    <location>
        <position position="2455"/>
    </location>
    <ligand>
        <name>Zn(2+)</name>
        <dbReference type="ChEBI" id="CHEBI:29105"/>
        <label>4</label>
    </ligand>
</feature>
<feature type="binding site" evidence="30">
    <location>
        <position position="2458"/>
    </location>
    <ligand>
        <name>Zn(2+)</name>
        <dbReference type="ChEBI" id="CHEBI:29105"/>
        <label>4</label>
    </ligand>
</feature>
<feature type="binding site" evidence="30">
    <location>
        <position position="2491"/>
    </location>
    <ligand>
        <name>Zn(2+)</name>
        <dbReference type="ChEBI" id="CHEBI:29105"/>
        <label>5</label>
    </ligand>
</feature>
<feature type="binding site" evidence="30">
    <location>
        <position position="2494"/>
    </location>
    <ligand>
        <name>Zn(2+)</name>
        <dbReference type="ChEBI" id="CHEBI:29105"/>
        <label>5</label>
    </ligand>
</feature>
<feature type="binding site" evidence="30">
    <location>
        <position position="2498"/>
    </location>
    <ligand>
        <name>Zn(2+)</name>
        <dbReference type="ChEBI" id="CHEBI:29105"/>
        <label>5</label>
    </ligand>
</feature>
<feature type="binding site" evidence="30">
    <location>
        <position position="2501"/>
    </location>
    <ligand>
        <name>Zn(2+)</name>
        <dbReference type="ChEBI" id="CHEBI:29105"/>
        <label>5</label>
    </ligand>
</feature>
<feature type="binding site" evidence="18">
    <location>
        <position position="4364"/>
    </location>
    <ligand>
        <name>Zn(2+)</name>
        <dbReference type="ChEBI" id="CHEBI:29105"/>
        <label>6</label>
    </ligand>
</feature>
<feature type="binding site" evidence="18">
    <location>
        <position position="4367"/>
    </location>
    <ligand>
        <name>Zn(2+)</name>
        <dbReference type="ChEBI" id="CHEBI:29105"/>
        <label>6</label>
    </ligand>
</feature>
<feature type="binding site" evidence="18">
    <location>
        <position position="4373"/>
    </location>
    <ligand>
        <name>Zn(2+)</name>
        <dbReference type="ChEBI" id="CHEBI:29105"/>
        <label>6</label>
    </ligand>
</feature>
<feature type="binding site" evidence="18">
    <location>
        <position position="4380"/>
    </location>
    <ligand>
        <name>Zn(2+)</name>
        <dbReference type="ChEBI" id="CHEBI:29105"/>
        <label>6</label>
    </ligand>
</feature>
<feature type="binding site" evidence="18">
    <location>
        <position position="4406"/>
    </location>
    <ligand>
        <name>Zn(2+)</name>
        <dbReference type="ChEBI" id="CHEBI:29105"/>
        <label>7</label>
    </ligand>
</feature>
<feature type="binding site" evidence="18">
    <location>
        <position position="4409"/>
    </location>
    <ligand>
        <name>Zn(2+)</name>
        <dbReference type="ChEBI" id="CHEBI:29105"/>
        <label>7</label>
    </ligand>
</feature>
<feature type="binding site" evidence="18">
    <location>
        <position position="4417"/>
    </location>
    <ligand>
        <name>Zn(2+)</name>
        <dbReference type="ChEBI" id="CHEBI:29105"/>
        <label>7</label>
    </ligand>
</feature>
<feature type="binding site" evidence="18">
    <location>
        <position position="4419"/>
    </location>
    <ligand>
        <name>Zn(2+)</name>
        <dbReference type="ChEBI" id="CHEBI:29105"/>
        <label>7</label>
    </ligand>
</feature>
<feature type="binding site" evidence="3">
    <location>
        <position position="4636"/>
    </location>
    <ligand>
        <name>Mn(2+)</name>
        <dbReference type="ChEBI" id="CHEBI:29035"/>
    </ligand>
</feature>
<feature type="binding site" evidence="3">
    <location>
        <position position="4645"/>
    </location>
    <ligand>
        <name>Mn(2+)</name>
        <dbReference type="ChEBI" id="CHEBI:29035"/>
    </ligand>
</feature>
<feature type="binding site" evidence="33">
    <location>
        <position position="4718"/>
    </location>
    <ligand>
        <name>Zn(2+)</name>
        <dbReference type="ChEBI" id="CHEBI:29105"/>
        <label>8</label>
    </ligand>
</feature>
<feature type="binding site" evidence="33">
    <location>
        <position position="4724"/>
    </location>
    <ligand>
        <name>Zn(2+)</name>
        <dbReference type="ChEBI" id="CHEBI:29105"/>
        <label>8</label>
    </ligand>
</feature>
<feature type="binding site" evidence="33">
    <location>
        <position position="4729"/>
    </location>
    <ligand>
        <name>Zn(2+)</name>
        <dbReference type="ChEBI" id="CHEBI:29105"/>
        <label>8</label>
    </ligand>
</feature>
<feature type="binding site" evidence="33">
    <location>
        <position position="4733"/>
    </location>
    <ligand>
        <name>Zn(2+)</name>
        <dbReference type="ChEBI" id="CHEBI:29105"/>
        <label>8</label>
    </ligand>
</feature>
<feature type="binding site" evidence="14">
    <location>
        <position position="4910"/>
    </location>
    <ligand>
        <name>Zn(2+)</name>
        <dbReference type="ChEBI" id="CHEBI:29105"/>
        <label>9</label>
    </ligand>
</feature>
<feature type="binding site" evidence="14">
    <location>
        <position position="5065"/>
    </location>
    <ligand>
        <name>Zn(2+)</name>
        <dbReference type="ChEBI" id="CHEBI:29105"/>
        <label>9</label>
    </ligand>
</feature>
<feature type="binding site" evidence="14">
    <location>
        <position position="5068"/>
    </location>
    <ligand>
        <name>Zn(2+)</name>
        <dbReference type="ChEBI" id="CHEBI:29105"/>
        <label>9</label>
    </ligand>
</feature>
<feature type="binding site" evidence="14">
    <location>
        <position position="5069"/>
    </location>
    <ligand>
        <name>Zn(2+)</name>
        <dbReference type="ChEBI" id="CHEBI:29105"/>
        <label>9</label>
    </ligand>
</feature>
<feature type="binding site" evidence="9">
    <location>
        <position position="5360"/>
    </location>
    <ligand>
        <name>Zn(2+)</name>
        <dbReference type="ChEBI" id="CHEBI:29105"/>
        <label>10</label>
    </ligand>
</feature>
<feature type="binding site" evidence="9">
    <location>
        <position position="5363"/>
    </location>
    <ligand>
        <name>Zn(2+)</name>
        <dbReference type="ChEBI" id="CHEBI:29105"/>
        <label>10</label>
    </ligand>
</feature>
<feature type="binding site" evidence="9">
    <location>
        <position position="5371"/>
    </location>
    <ligand>
        <name>Zn(2+)</name>
        <dbReference type="ChEBI" id="CHEBI:29105"/>
        <label>11</label>
    </ligand>
</feature>
<feature type="binding site" evidence="9">
    <location>
        <position position="5374"/>
    </location>
    <ligand>
        <name>Zn(2+)</name>
        <dbReference type="ChEBI" id="CHEBI:29105"/>
        <label>11</label>
    </ligand>
</feature>
<feature type="binding site" evidence="9">
    <location>
        <position position="5381"/>
    </location>
    <ligand>
        <name>Zn(2+)</name>
        <dbReference type="ChEBI" id="CHEBI:29105"/>
        <label>10</label>
    </ligand>
</feature>
<feature type="binding site" evidence="9">
    <location>
        <position position="5384"/>
    </location>
    <ligand>
        <name>Zn(2+)</name>
        <dbReference type="ChEBI" id="CHEBI:29105"/>
        <label>10</label>
    </ligand>
</feature>
<feature type="binding site" evidence="9">
    <location>
        <position position="5388"/>
    </location>
    <ligand>
        <name>Zn(2+)</name>
        <dbReference type="ChEBI" id="CHEBI:29105"/>
        <label>11</label>
    </ligand>
</feature>
<feature type="binding site" evidence="9">
    <location>
        <position position="5394"/>
    </location>
    <ligand>
        <name>Zn(2+)</name>
        <dbReference type="ChEBI" id="CHEBI:29105"/>
        <label>11</label>
    </ligand>
</feature>
<feature type="binding site" evidence="9">
    <location>
        <position position="5405"/>
    </location>
    <ligand>
        <name>Zn(2+)</name>
        <dbReference type="ChEBI" id="CHEBI:29105"/>
        <label>12</label>
    </ligand>
</feature>
<feature type="binding site" evidence="9">
    <location>
        <position position="5410"/>
    </location>
    <ligand>
        <name>Zn(2+)</name>
        <dbReference type="ChEBI" id="CHEBI:29105"/>
        <label>12</label>
    </ligand>
</feature>
<feature type="binding site" evidence="9">
    <location>
        <position position="5427"/>
    </location>
    <ligand>
        <name>Zn(2+)</name>
        <dbReference type="ChEBI" id="CHEBI:29105"/>
        <label>12</label>
    </ligand>
</feature>
<feature type="binding site" evidence="9">
    <location>
        <position position="5430"/>
    </location>
    <ligand>
        <name>Zn(2+)</name>
        <dbReference type="ChEBI" id="CHEBI:29105"/>
        <label>12</label>
    </ligand>
</feature>
<feature type="binding site" evidence="1">
    <location>
        <begin position="5636"/>
        <end position="5643"/>
    </location>
    <ligand>
        <name>ATP</name>
        <dbReference type="ChEBI" id="CHEBI:30616"/>
    </ligand>
</feature>
<feature type="binding site" evidence="19">
    <location>
        <position position="6164"/>
    </location>
    <ligand>
        <name>Zn(2+)</name>
        <dbReference type="ChEBI" id="CHEBI:29105"/>
        <label>13</label>
    </ligand>
</feature>
<feature type="binding site" evidence="19">
    <location>
        <position position="6167"/>
    </location>
    <ligand>
        <name>Zn(2+)</name>
        <dbReference type="ChEBI" id="CHEBI:29105"/>
        <label>13</label>
    </ligand>
</feature>
<feature type="binding site" evidence="19">
    <location>
        <position position="6183"/>
    </location>
    <ligand>
        <name>Zn(2+)</name>
        <dbReference type="ChEBI" id="CHEBI:29105"/>
        <label>13</label>
    </ligand>
</feature>
<feature type="binding site" evidence="19">
    <location>
        <position position="6186"/>
    </location>
    <ligand>
        <name>Zn(2+)</name>
        <dbReference type="ChEBI" id="CHEBI:29105"/>
        <label>13</label>
    </ligand>
</feature>
<feature type="binding site" evidence="19">
    <location>
        <position position="6214"/>
    </location>
    <ligand>
        <name>Zn(2+)</name>
        <dbReference type="ChEBI" id="CHEBI:29105"/>
        <label>14</label>
    </ligand>
</feature>
<feature type="binding site" evidence="19">
    <location>
        <position position="6218"/>
    </location>
    <ligand>
        <name>Zn(2+)</name>
        <dbReference type="ChEBI" id="CHEBI:29105"/>
        <label>14</label>
    </ligand>
</feature>
<feature type="binding site" evidence="19">
    <location>
        <position position="6221"/>
    </location>
    <ligand>
        <name>Zn(2+)</name>
        <dbReference type="ChEBI" id="CHEBI:29105"/>
        <label>14</label>
    </ligand>
</feature>
<feature type="binding site" evidence="19">
    <location>
        <position position="6236"/>
    </location>
    <ligand>
        <name>Zn(2+)</name>
        <dbReference type="ChEBI" id="CHEBI:29105"/>
        <label>14</label>
    </ligand>
</feature>
<feature type="binding site" evidence="20">
    <location>
        <begin position="6288"/>
        <end position="6294"/>
    </location>
    <ligand>
        <name>S-adenosyl-L-methionine</name>
        <dbReference type="ChEBI" id="CHEBI:59789"/>
    </ligand>
</feature>
<feature type="binding site" evidence="20">
    <location>
        <position position="6404"/>
    </location>
    <ligand>
        <name>Zn(2+)</name>
        <dbReference type="ChEBI" id="CHEBI:29105"/>
        <label>15</label>
    </ligand>
</feature>
<feature type="binding site" evidence="20">
    <location>
        <position position="6425"/>
    </location>
    <ligand>
        <name>Zn(2+)</name>
        <dbReference type="ChEBI" id="CHEBI:29105"/>
        <label>15</label>
    </ligand>
</feature>
<feature type="binding site" evidence="20">
    <location>
        <position position="6436"/>
    </location>
    <ligand>
        <name>Zn(2+)</name>
        <dbReference type="ChEBI" id="CHEBI:29105"/>
        <label>15</label>
    </ligand>
</feature>
<feature type="binding site" evidence="20">
    <location>
        <position position="6439"/>
    </location>
    <ligand>
        <name>Zn(2+)</name>
        <dbReference type="ChEBI" id="CHEBI:29105"/>
        <label>15</label>
    </ligand>
</feature>
<feature type="site" description="Cleavage; by PL1-PRO" evidence="1">
    <location>
        <begin position="222"/>
        <end position="223"/>
    </location>
</feature>
<feature type="site" description="Cleavage; by PL1-PRO" evidence="1">
    <location>
        <begin position="809"/>
        <end position="810"/>
    </location>
</feature>
<feature type="site" description="Cleavage; by PL2-PRO" evidence="1">
    <location>
        <begin position="2808"/>
        <end position="2809"/>
    </location>
</feature>
<feature type="site" description="Cleavage; by 3CL-PRO" evidence="1">
    <location>
        <begin position="3304"/>
        <end position="3305"/>
    </location>
</feature>
<feature type="site" description="Cleavage; by 3CL-PRO" evidence="1">
    <location>
        <begin position="3607"/>
        <end position="3608"/>
    </location>
</feature>
<feature type="site" description="Cleavage; by 3CL-PRO" evidence="1">
    <location>
        <begin position="3894"/>
        <end position="3895"/>
    </location>
</feature>
<feature type="site" description="Cleavage; by 3CL-PRO" evidence="1">
    <location>
        <begin position="3986"/>
        <end position="3987"/>
    </location>
</feature>
<feature type="site" description="Cleavage; by 3CL-PRO" evidence="1">
    <location>
        <begin position="4180"/>
        <end position="4181"/>
    </location>
</feature>
<feature type="site" description="Cleavage; by 3CL-PRO" evidence="1">
    <location>
        <begin position="4290"/>
        <end position="4291"/>
    </location>
</feature>
<feature type="site" description="Cleavage; by 3CL-PRO" evidence="1">
    <location>
        <begin position="4427"/>
        <end position="4428"/>
    </location>
</feature>
<feature type="site" description="Cleavage; by 3CL-PRO" evidence="1">
    <location>
        <begin position="5355"/>
        <end position="5356"/>
    </location>
</feature>
<feature type="site" description="Cleavage; by 3CL-PRO" evidence="1">
    <location>
        <begin position="6479"/>
        <end position="6480"/>
    </location>
</feature>
<feature type="site" description="Cleavage; by 3CL-PRO" evidence="1">
    <location>
        <begin position="6853"/>
        <end position="6854"/>
    </location>
</feature>
<feature type="disulfide bond" evidence="31">
    <location>
        <begin position="2309"/>
        <end position="2333"/>
    </location>
</feature>
<feature type="disulfide bond" evidence="31">
    <location>
        <begin position="2324"/>
        <end position="2330"/>
    </location>
</feature>
<organismHost>
    <name type="scientific">Homo sapiens</name>
    <name type="common">Human</name>
    <dbReference type="NCBI Taxonomy" id="9606"/>
</organismHost>
<accession>P0C6X3</accession>
<accession>Q14EB2</accession>
<evidence type="ECO:0000250" key="1"/>
<evidence type="ECO:0000250" key="2">
    <source>
        <dbReference type="UniProtKB" id="P0C6X7"/>
    </source>
</evidence>
<evidence type="ECO:0000250" key="3">
    <source>
        <dbReference type="UniProtKB" id="P0DTD1"/>
    </source>
</evidence>
<evidence type="ECO:0000255" key="4"/>
<evidence type="ECO:0000255" key="5">
    <source>
        <dbReference type="PROSITE-ProRule" id="PRU00214"/>
    </source>
</evidence>
<evidence type="ECO:0000255" key="6">
    <source>
        <dbReference type="PROSITE-ProRule" id="PRU00444"/>
    </source>
</evidence>
<evidence type="ECO:0000255" key="7">
    <source>
        <dbReference type="PROSITE-ProRule" id="PRU00490"/>
    </source>
</evidence>
<evidence type="ECO:0000255" key="8">
    <source>
        <dbReference type="PROSITE-ProRule" id="PRU00772"/>
    </source>
</evidence>
<evidence type="ECO:0000255" key="9">
    <source>
        <dbReference type="PROSITE-ProRule" id="PRU00986"/>
    </source>
</evidence>
<evidence type="ECO:0000255" key="10">
    <source>
        <dbReference type="PROSITE-ProRule" id="PRU01289"/>
    </source>
</evidence>
<evidence type="ECO:0000255" key="11">
    <source>
        <dbReference type="PROSITE-ProRule" id="PRU01290"/>
    </source>
</evidence>
<evidence type="ECO:0000255" key="12">
    <source>
        <dbReference type="PROSITE-ProRule" id="PRU01291"/>
    </source>
</evidence>
<evidence type="ECO:0000255" key="13">
    <source>
        <dbReference type="PROSITE-ProRule" id="PRU01292"/>
    </source>
</evidence>
<evidence type="ECO:0000255" key="14">
    <source>
        <dbReference type="PROSITE-ProRule" id="PRU01293"/>
    </source>
</evidence>
<evidence type="ECO:0000255" key="15">
    <source>
        <dbReference type="PROSITE-ProRule" id="PRU01294"/>
    </source>
</evidence>
<evidence type="ECO:0000255" key="16">
    <source>
        <dbReference type="PROSITE-ProRule" id="PRU01295"/>
    </source>
</evidence>
<evidence type="ECO:0000255" key="17">
    <source>
        <dbReference type="PROSITE-ProRule" id="PRU01296"/>
    </source>
</evidence>
<evidence type="ECO:0000255" key="18">
    <source>
        <dbReference type="PROSITE-ProRule" id="PRU01297"/>
    </source>
</evidence>
<evidence type="ECO:0000255" key="19">
    <source>
        <dbReference type="PROSITE-ProRule" id="PRU01298"/>
    </source>
</evidence>
<evidence type="ECO:0000255" key="20">
    <source>
        <dbReference type="PROSITE-ProRule" id="PRU01299"/>
    </source>
</evidence>
<evidence type="ECO:0000255" key="21">
    <source>
        <dbReference type="PROSITE-ProRule" id="PRU01300"/>
    </source>
</evidence>
<evidence type="ECO:0000255" key="22">
    <source>
        <dbReference type="PROSITE-ProRule" id="PRU01303"/>
    </source>
</evidence>
<evidence type="ECO:0000255" key="23">
    <source>
        <dbReference type="PROSITE-ProRule" id="PRU01305"/>
    </source>
</evidence>
<evidence type="ECO:0000255" key="24">
    <source>
        <dbReference type="PROSITE-ProRule" id="PRU01306"/>
    </source>
</evidence>
<evidence type="ECO:0000255" key="25">
    <source>
        <dbReference type="PROSITE-ProRule" id="PRU01307"/>
    </source>
</evidence>
<evidence type="ECO:0000255" key="26">
    <source>
        <dbReference type="PROSITE-ProRule" id="PRU01308"/>
    </source>
</evidence>
<evidence type="ECO:0000255" key="27">
    <source>
        <dbReference type="PROSITE-ProRule" id="PRU01333"/>
    </source>
</evidence>
<evidence type="ECO:0000255" key="28">
    <source>
        <dbReference type="PROSITE-ProRule" id="PRU01334"/>
    </source>
</evidence>
<evidence type="ECO:0000255" key="29">
    <source>
        <dbReference type="PROSITE-ProRule" id="PRU01335"/>
    </source>
</evidence>
<evidence type="ECO:0000255" key="30">
    <source>
        <dbReference type="PROSITE-ProRule" id="PRU01336"/>
    </source>
</evidence>
<evidence type="ECO:0000255" key="31">
    <source>
        <dbReference type="PROSITE-ProRule" id="PRU01337"/>
    </source>
</evidence>
<evidence type="ECO:0000255" key="32">
    <source>
        <dbReference type="PROSITE-ProRule" id="PRU01338"/>
    </source>
</evidence>
<evidence type="ECO:0000255" key="33">
    <source>
        <dbReference type="PROSITE-ProRule" id="PRU01344"/>
    </source>
</evidence>
<evidence type="ECO:0000256" key="34">
    <source>
        <dbReference type="SAM" id="MobiDB-lite"/>
    </source>
</evidence>
<evidence type="ECO:0000305" key="35"/>
<protein>
    <recommendedName>
        <fullName>Replicase polyprotein 1ab</fullName>
        <shortName>pp1ab</shortName>
    </recommendedName>
    <alternativeName>
        <fullName>ORF1ab polyprotein</fullName>
    </alternativeName>
    <component>
        <recommendedName>
            <fullName>Host translation inhibitor nsp1</fullName>
            <shortName>nsp1</shortName>
        </recommendedName>
        <alternativeName>
            <fullName>p28</fullName>
        </alternativeName>
    </component>
    <component>
        <recommendedName>
            <fullName>Non-structural protein 2</fullName>
            <shortName>nsp2</shortName>
        </recommendedName>
        <alternativeName>
            <fullName>p65</fullName>
        </alternativeName>
    </component>
    <component>
        <recommendedName>
            <fullName>Papain-like proteinase nsp3</fullName>
            <shortName>PL-PRO</shortName>
            <ecNumber>3.4.19.12</ecNumber>
            <ecNumber>3.4.22.-</ecNumber>
        </recommendedName>
        <alternativeName>
            <fullName>Non-structural protein 3</fullName>
            <shortName>nsp3</shortName>
        </alternativeName>
        <alternativeName>
            <fullName>p210</fullName>
        </alternativeName>
    </component>
    <component>
        <recommendedName>
            <fullName>Non-structural protein 4</fullName>
            <shortName>nsp4</shortName>
        </recommendedName>
        <alternativeName>
            <fullName>Peptide HD2</fullName>
        </alternativeName>
        <alternativeName>
            <fullName>p44</fullName>
        </alternativeName>
    </component>
    <component>
        <recommendedName>
            <fullName>3C-like proteinase nsp5</fullName>
            <shortName>3CL-PRO</shortName>
            <shortName>3CLp</shortName>
            <ecNumber>3.4.22.-</ecNumber>
        </recommendedName>
        <alternativeName>
            <fullName>M-PRO</fullName>
        </alternativeName>
        <alternativeName>
            <fullName>nsp5</fullName>
        </alternativeName>
        <alternativeName>
            <fullName>p27</fullName>
        </alternativeName>
    </component>
    <component>
        <recommendedName>
            <fullName>Non-structural protein 6</fullName>
            <shortName>nsp6</shortName>
        </recommendedName>
    </component>
    <component>
        <recommendedName>
            <fullName>Non-structural protein 7</fullName>
            <shortName>nsp7</shortName>
        </recommendedName>
        <alternativeName>
            <fullName>p10</fullName>
        </alternativeName>
    </component>
    <component>
        <recommendedName>
            <fullName>Non-structural protein 8</fullName>
            <shortName>nsp8</shortName>
        </recommendedName>
        <alternativeName>
            <fullName>p22</fullName>
        </alternativeName>
    </component>
    <component>
        <recommendedName>
            <fullName>Viral protein genome-linked nsp9</fullName>
        </recommendedName>
        <alternativeName>
            <fullName>Non-structural protein 9</fullName>
            <shortName>nsp9</shortName>
        </alternativeName>
        <alternativeName>
            <fullName>RNA-capping enzyme subunit nsp9</fullName>
        </alternativeName>
        <alternativeName>
            <fullName>p12</fullName>
        </alternativeName>
    </component>
    <component>
        <recommendedName>
            <fullName>Non-structural protein 10</fullName>
            <shortName>nsp10</shortName>
        </recommendedName>
        <alternativeName>
            <fullName>Growth factor-like peptide</fullName>
            <shortName>GFL</shortName>
        </alternativeName>
        <alternativeName>
            <fullName>p15</fullName>
        </alternativeName>
    </component>
    <component>
        <recommendedName>
            <fullName>RNA-directed RNA polymerase nsp12</fullName>
            <shortName>Pol</shortName>
            <shortName>RdRp</shortName>
            <ecNumber>2.7.7.48</ecNumber>
            <ecNumber>2.7.7.50</ecNumber>
        </recommendedName>
        <alternativeName>
            <fullName>nsp12</fullName>
        </alternativeName>
        <alternativeName>
            <fullName>p100</fullName>
        </alternativeName>
    </component>
    <component>
        <recommendedName>
            <fullName>Helicase nsp13</fullName>
            <shortName>Hel</shortName>
            <ecNumber>3.6.4.12</ecNumber>
            <ecNumber>3.6.4.13</ecNumber>
        </recommendedName>
        <alternativeName>
            <fullName>nsp13</fullName>
        </alternativeName>
        <alternativeName>
            <fullName>p67</fullName>
        </alternativeName>
    </component>
    <component>
        <recommendedName>
            <fullName>Guanine-N7 methyltransferase nsp14</fullName>
            <shortName>ExoN</shortName>
            <ecNumber>2.1.1.56</ecNumber>
            <ecNumber>3.1.13.-</ecNumber>
        </recommendedName>
        <alternativeName>
            <fullName>nsp14</fullName>
        </alternativeName>
    </component>
    <component>
        <recommendedName>
            <fullName>Uridylate-specific endoribonuclease nsp15</fullName>
            <ecNumber>4.6.1.-</ecNumber>
        </recommendedName>
        <alternativeName>
            <fullName>NendoU</fullName>
        </alternativeName>
        <alternativeName>
            <fullName>nsp15</fullName>
        </alternativeName>
        <alternativeName>
            <fullName>p35</fullName>
        </alternativeName>
    </component>
    <component>
        <recommendedName>
            <fullName>2'-O-methyltransferase nsp16</fullName>
            <ecNumber>2.1.1.57</ecNumber>
        </recommendedName>
        <alternativeName>
            <fullName>nsp16</fullName>
        </alternativeName>
    </component>
</protein>
<organism>
    <name type="scientific">Human coronavirus HKU1 (isolate N2)</name>
    <name type="common">HCoV-HKU1</name>
    <dbReference type="NCBI Taxonomy" id="443240"/>
    <lineage>
        <taxon>Viruses</taxon>
        <taxon>Riboviria</taxon>
        <taxon>Orthornavirae</taxon>
        <taxon>Pisuviricota</taxon>
        <taxon>Pisoniviricetes</taxon>
        <taxon>Nidovirales</taxon>
        <taxon>Cornidovirineae</taxon>
        <taxon>Coronaviridae</taxon>
        <taxon>Orthocoronavirinae</taxon>
        <taxon>Betacoronavirus</taxon>
        <taxon>Embecovirus</taxon>
        <taxon>Human coronavirus HKU1</taxon>
    </lineage>
</organism>
<comment type="function">
    <text evidence="2">The replicase polyprotein of coronaviruses is a multifunctional protein: it contains the activities necessary for the transcription of negative stranded RNA, leader RNA, subgenomic mRNAs and progeny virion RNA as well as proteinases responsible for the cleavage of the polyprotein into functional products.</text>
</comment>
<comment type="function">
    <molecule>Host translation inhibitor nsp1</molecule>
    <text evidence="2">Inhibits host translation by interacting with the 40S ribosomal subunit. The nsp1-40S ribosome complex further induces an endonucleolytic cleavage near the 5'UTR of host mRNAs, targeting them for degradation. Viral mRNAs are not susceptible to nsp1-mediated endonucleolytic RNA cleavage thanks to the presence of a 5'-end leader sequence and are therefore protected from degradation. By suppressing host gene expression, nsp1 facilitates efficient viral gene expression in infected cells and evasion from host immune response.</text>
</comment>
<comment type="function">
    <molecule>Non-structural protein 2</molecule>
    <text evidence="2">May play a role in the modulation of host cell survival signaling pathway by interacting with host PHB and PHB2. Indeed, these two proteins play a role in maintaining the functional integrity of the mitochondria and protecting cells from various stresses.</text>
</comment>
<comment type="function">
    <molecule>Papain-like proteinase nsp3</molecule>
    <text evidence="2">Responsible for the cleavages located at the N-terminus of the replicase polyprotein. In addition, PL-PRO possesses a deubiquitinating/deISGylating activity and processes both 'Lys-48'- and 'Lys-63'-linked polyubiquitin chains from cellular substrates. Participates together with nsp4 in the assembly of virally-induced cytoplasmic double-membrane vesicles necessary for viral replication. Antagonizes innate immune induction of type I interferon by blocking the phosphorylation, dimerization and subsequent nuclear translocation of host IRF3. Also prevents host NF-kappa-B signaling.</text>
</comment>
<comment type="function">
    <molecule>Non-structural protein 4</molecule>
    <text evidence="2">Participates in the assembly of virally-induced cytoplasmic double-membrane vesicles necessary for viral replication.</text>
</comment>
<comment type="function">
    <molecule>3C-like proteinase nsp5</molecule>
    <text evidence="2 8">Cleaves the C-terminus of replicase polyprotein at 11 sites. Recognizes substrates containing the core sequence [ILMVF]-Q-|-[SGACN]. Also able to bind an ADP-ribose-1''-phosphate (ADRP).</text>
</comment>
<comment type="function">
    <molecule>Non-structural protein 6</molecule>
    <text evidence="2">Plays a role in the initial induction of autophagosomes from host endoplasmic reticulum. Later, limits the expansion of these phagosomes that are no longer able to deliver viral components to lysosomes.</text>
</comment>
<comment type="function">
    <molecule>Non-structural protein 7</molecule>
    <text evidence="2">Forms a hexadecamer with nsp8 (8 subunits of each) that may participate in viral replication by acting as a primase. Alternatively, may synthesize substantially longer products than oligonucleotide primers.</text>
</comment>
<comment type="function">
    <molecule>Non-structural protein 8</molecule>
    <text evidence="2">Forms a hexadecamer with nsp7 (8 subunits of each) that may participate in viral replication by acting as a primase. Alternatively, may synthesize substantially longer products than oligonucleotide primers.</text>
</comment>
<comment type="function">
    <molecule>Viral protein genome-linked nsp9</molecule>
    <text evidence="3">Forms a primer, NSP9-pU, which is utilized by the polymerase for the initiation of RNA chains. Interacts with ribosome signal recognition particle RNA (SRP). Together with NSP8, suppress protein integration into the cell membrane, thereby disrupting host immune defenses.</text>
</comment>
<comment type="function">
    <molecule>Non-structural protein 10</molecule>
    <text evidence="2">Plays a pivotal role in viral transcription by stimulating both nsp14 3'-5' exoribonuclease and nsp16 2'-O-methyltransferase activities. Therefore plays an essential role in viral mRNAs cap methylation.</text>
</comment>
<comment type="function">
    <molecule>RNA-directed RNA polymerase nsp12</molecule>
    <text evidence="3">RNA-directed RNA polymerase that catalyzes the transcription of viral genomic and subgenomic RNAs. Acts in complex with nsp7 and nsp8 to transcribe both the minus and positive strands of genomic RNA. The kinase-like NiRAN domain of NSP12 attaches one or more nucleotides to the amino terminus of NSP9, forming a covalent RNA-protein intermediate that serves as transcription/replication primer. Subgenomic RNAs (sgRNAs) are formed by discontinuous transcription: The polymerase has the ability to pause at transcription-regulating sequences (TRS) and jump to the leader TRS, resulting in a major deletion. This creates a series of subgenomic RNAs that are replicated, transcribed and translated. In addition, Nsp12 is a subunit of the viral RNA capping enzyme that catalyzes the RNA guanylyltransferase reaction for genomic and sub-genomic RNAs. Subsequently, the NiRAN domain transfers RNA to GDP, and forms the core cap structure GpppA-RNA.</text>
</comment>
<comment type="function">
    <molecule>Helicase nsp13</molecule>
    <text evidence="2">Multi-functional protein with a zinc-binding domain in N-terminus displaying RNA and DNA duplex-unwinding activities with 5' to 3' polarity. Activity of helicase is dependent on magnesium.</text>
</comment>
<comment type="function">
    <molecule>Guanine-N7 methyltransferase nsp14</molecule>
    <text evidence="2">Plays a role in viral RNA synthesis through two distinct activities. The N7-guanine methyltransferase activity plays a role in the formation of the cap structure GpppA-RNA. The proofreading exoribonuclease reduces the sensitivity of the virus to RNA mutagens during replication. This activity acts on both ssRNA and dsRNA in a 3'-5' direction.</text>
</comment>
<comment type="function">
    <molecule>Uridylate-specific endoribonuclease nsp15</molecule>
    <text evidence="2">Plays a role in viral transcription/replication and prevents the simultaneous activation of host cell dsRNA sensors, such as MDA5/IFIH1, OAS, and PKR (By similarity). Acts by degrading the 5'-polyuridines generated during replication of the poly(A) region of viral genomic and subgenomic RNAs. Catalyzes a two-step reaction in which a 2'3'-cyclic phosphate (2'3'-cP) is first generated by 2'-O transesterification, which is then hydrolyzed to a 3'-phosphate (3'-P) (By similarity). If not degraded, poly(U) RNA would hybridize with poly(A) RNA tails and activate host dsRNA sensors (By similarity).</text>
</comment>
<comment type="function">
    <molecule>2'-O-methyltransferase nsp16</molecule>
    <text evidence="2">Methyltransferase that mediates mRNA cap 2'-O-ribose methylation to the 5'-cap structure of viral mRNAs. N7-methyl guanosine cap is a prerequisite for binding of nsp16. Therefore plays an essential role in viral mRNAs cap methylation which is essential to evade immune system.</text>
</comment>
<comment type="catalytic activity">
    <molecule>RNA-directed RNA polymerase nsp12</molecule>
    <reaction>
        <text>RNA(n) + a ribonucleoside 5'-triphosphate = RNA(n+1) + diphosphate</text>
        <dbReference type="Rhea" id="RHEA:21248"/>
        <dbReference type="Rhea" id="RHEA-COMP:14527"/>
        <dbReference type="Rhea" id="RHEA-COMP:17342"/>
        <dbReference type="ChEBI" id="CHEBI:33019"/>
        <dbReference type="ChEBI" id="CHEBI:61557"/>
        <dbReference type="ChEBI" id="CHEBI:140395"/>
        <dbReference type="EC" id="2.7.7.48"/>
    </reaction>
</comment>
<comment type="catalytic activity">
    <molecule>Helicase nsp13</molecule>
    <reaction>
        <text>ATP + H2O = ADP + phosphate + H(+)</text>
        <dbReference type="Rhea" id="RHEA:13065"/>
        <dbReference type="ChEBI" id="CHEBI:15377"/>
        <dbReference type="ChEBI" id="CHEBI:15378"/>
        <dbReference type="ChEBI" id="CHEBI:30616"/>
        <dbReference type="ChEBI" id="CHEBI:43474"/>
        <dbReference type="ChEBI" id="CHEBI:456216"/>
        <dbReference type="EC" id="3.6.4.12"/>
    </reaction>
</comment>
<comment type="catalytic activity">
    <molecule>Helicase nsp13</molecule>
    <reaction>
        <text>ATP + H2O = ADP + phosphate + H(+)</text>
        <dbReference type="Rhea" id="RHEA:13065"/>
        <dbReference type="ChEBI" id="CHEBI:15377"/>
        <dbReference type="ChEBI" id="CHEBI:15378"/>
        <dbReference type="ChEBI" id="CHEBI:30616"/>
        <dbReference type="ChEBI" id="CHEBI:43474"/>
        <dbReference type="ChEBI" id="CHEBI:456216"/>
        <dbReference type="EC" id="3.6.4.13"/>
    </reaction>
</comment>
<comment type="catalytic activity">
    <molecule>Papain-like proteinase nsp3</molecule>
    <reaction>
        <text>Thiol-dependent hydrolysis of ester, thioester, amide, peptide and isopeptide bonds formed by the C-terminal Gly of ubiquitin (a 76-residue protein attached to proteins as an intracellular targeting signal).</text>
        <dbReference type="EC" id="3.4.19.12"/>
    </reaction>
</comment>
<comment type="catalytic activity">
    <molecule>2'-O-methyltransferase nsp16</molecule>
    <reaction evidence="2">
        <text>a 5'-end (N(7)-methyl 5'-triphosphoguanosine)-ribonucleoside in mRNA + S-adenosyl-L-methionine = a 5'-end (N(7)-methyl 5'-triphosphoguanosine)-(2'-O-methyl-ribonucleoside) in mRNA + S-adenosyl-L-homocysteine + H(+)</text>
        <dbReference type="Rhea" id="RHEA:67020"/>
        <dbReference type="Rhea" id="RHEA-COMP:17167"/>
        <dbReference type="Rhea" id="RHEA-COMP:17168"/>
        <dbReference type="ChEBI" id="CHEBI:15378"/>
        <dbReference type="ChEBI" id="CHEBI:57856"/>
        <dbReference type="ChEBI" id="CHEBI:59789"/>
        <dbReference type="ChEBI" id="CHEBI:156461"/>
        <dbReference type="ChEBI" id="CHEBI:167609"/>
        <dbReference type="EC" id="2.1.1.57"/>
    </reaction>
</comment>
<comment type="catalytic activity">
    <molecule>Uridylate-specific endoribonuclease nsp15</molecule>
    <reaction evidence="2">
        <text>uridylyl-uridylyl-ribonucleotide-RNA = a 3'-end uridylyl-2',3'-cyclophospho-uridine-RNA + a 5'-end dephospho-ribonucleoside-RNA</text>
        <dbReference type="Rhea" id="RHEA:67732"/>
        <dbReference type="Rhea" id="RHEA-COMP:13936"/>
        <dbReference type="Rhea" id="RHEA-COMP:17334"/>
        <dbReference type="Rhea" id="RHEA-COMP:17335"/>
        <dbReference type="ChEBI" id="CHEBI:138284"/>
        <dbReference type="ChEBI" id="CHEBI:173079"/>
        <dbReference type="ChEBI" id="CHEBI:173080"/>
    </reaction>
</comment>
<comment type="catalytic activity">
    <molecule>Viral protein genome-linked nsp9</molecule>
    <reaction evidence="3">
        <text>a 5'-end diphospho-ribonucleoside in mRNA + GTP + H(+) = a 5'-end (5'-triphosphoguanosine)-ribonucleoside in mRNA + diphosphate</text>
        <dbReference type="Rhea" id="RHEA:67012"/>
        <dbReference type="Rhea" id="RHEA-COMP:17165"/>
        <dbReference type="Rhea" id="RHEA-COMP:17166"/>
        <dbReference type="ChEBI" id="CHEBI:15378"/>
        <dbReference type="ChEBI" id="CHEBI:33019"/>
        <dbReference type="ChEBI" id="CHEBI:37565"/>
        <dbReference type="ChEBI" id="CHEBI:167616"/>
        <dbReference type="ChEBI" id="CHEBI:167617"/>
        <dbReference type="EC" id="2.7.7.50"/>
    </reaction>
    <physiologicalReaction direction="left-to-right" evidence="3">
        <dbReference type="Rhea" id="RHEA:67013"/>
    </physiologicalReaction>
</comment>
<comment type="catalytic activity">
    <molecule>Guanine-N7 methyltransferase nsp14</molecule>
    <reaction evidence="2">
        <text>a 5'-end (5'-triphosphoguanosine)-ribonucleoside in mRNA + S-adenosyl-L-methionine = a 5'-end (N(7)-methyl 5'-triphosphoguanosine)-ribonucleoside in mRNA + S-adenosyl-L-homocysteine</text>
        <dbReference type="Rhea" id="RHEA:67008"/>
        <dbReference type="Rhea" id="RHEA-COMP:17166"/>
        <dbReference type="Rhea" id="RHEA-COMP:17167"/>
        <dbReference type="ChEBI" id="CHEBI:57856"/>
        <dbReference type="ChEBI" id="CHEBI:59789"/>
        <dbReference type="ChEBI" id="CHEBI:156461"/>
        <dbReference type="ChEBI" id="CHEBI:167617"/>
        <dbReference type="EC" id="2.1.1.56"/>
    </reaction>
    <physiologicalReaction direction="left-to-right" evidence="2">
        <dbReference type="Rhea" id="RHEA:67009"/>
    </physiologicalReaction>
</comment>
<comment type="cofactor">
    <molecule>Uridylate-specific endoribonuclease nsp15</molecule>
    <cofactor evidence="2">
        <name>Mn(2+)</name>
        <dbReference type="ChEBI" id="CHEBI:29035"/>
    </cofactor>
    <text evidence="2">Likely affects Nsp15 binding to RNA.</text>
</comment>
<comment type="cofactor">
    <molecule>RNA-directed RNA polymerase nsp12</molecule>
    <cofactor evidence="3">
        <name>Mg(2+)</name>
        <dbReference type="ChEBI" id="CHEBI:18420"/>
    </cofactor>
</comment>
<comment type="subunit">
    <molecule>Non-structural protein 2</molecule>
    <text evidence="2">Interacts with host PHB and PHB2.</text>
</comment>
<comment type="subunit">
    <molecule>Non-structural protein 4</molecule>
    <text evidence="2">Interacts with papain-like protease nsp3 and non-structural protein 6.</text>
</comment>
<comment type="subunit">
    <molecule>3C-like proteinase nsp5</molecule>
    <text evidence="2">Monomer. Homodimer. Only the homodimer shows catalytic activity.</text>
</comment>
<comment type="subunit">
    <molecule>Non-structural protein 7</molecule>
    <text evidence="3">Interacts with nsp8 and nsp12 to form the replication-transcription complex (RTC): nsp12, nsp7, two subunits of nsp8, and up to two subunits of nsp13.</text>
</comment>
<comment type="subunit">
    <molecule>Non-structural protein 8</molecule>
    <text evidence="3">Interacts with nsp7, nsp13 and nsp12 to form the replication-transcription complex (RTC): nsp12, nsp7, two subunits of nsp8, and up to two subunits of nsp13.</text>
</comment>
<comment type="subunit">
    <molecule>Viral protein genome-linked nsp9</molecule>
    <text evidence="3">Interacts with nsp12.</text>
</comment>
<comment type="subunit">
    <molecule>Non-structural protein 10</molecule>
    <text evidence="3">Interacts with proofreading exoribonuclease nsp14 and 2'-O-methyltransferase nsp16; these interactions enhance nsp14 and nsp16 enzymatic activities.</text>
</comment>
<comment type="subunit">
    <molecule>RNA-directed RNA polymerase nsp12</molecule>
    <text evidence="3">Interacts with nsp7 and nsp8 to form the replication-transcription complex (RTC): nsp12, nsp7, two subunits of nsp8, and up to two subunits of nsp13. Interacts with nsp9.</text>
</comment>
<comment type="subunit">
    <molecule>Helicase nsp13</molecule>
    <text evidence="3">Interacts with nsp8 to form the replication-transcription complex (RTC): nsp12, nsp7, two subunits of nsp8, and up to two subunits of nsp13.</text>
</comment>
<comment type="subcellular location">
    <molecule>Papain-like proteinase nsp3</molecule>
    <subcellularLocation>
        <location>Host membrane</location>
        <topology>Multi-pass membrane protein</topology>
    </subcellularLocation>
    <subcellularLocation>
        <location evidence="2">Host cytoplasm</location>
    </subcellularLocation>
</comment>
<comment type="subcellular location">
    <molecule>Non-structural protein 4</molecule>
    <subcellularLocation>
        <location>Host membrane</location>
        <topology>Multi-pass membrane protein</topology>
    </subcellularLocation>
    <subcellularLocation>
        <location>Host cytoplasm</location>
    </subcellularLocation>
    <text evidence="2">Localizes in virally-induced cytoplasmic double-membrane vesicles.</text>
</comment>
<comment type="subcellular location">
    <molecule>Non-structural protein 6</molecule>
    <subcellularLocation>
        <location evidence="35">Host membrane</location>
        <topology evidence="35">Multi-pass membrane protein</topology>
    </subcellularLocation>
</comment>
<comment type="subcellular location">
    <molecule>Non-structural protein 7</molecule>
    <subcellularLocation>
        <location evidence="1">Host cytoplasm</location>
        <location evidence="1">Host perinuclear region</location>
    </subcellularLocation>
    <text>nsp7, nsp8, nsp9 and nsp10 are localized in cytoplasmic foci, largely perinuclear. Late in infection, they merge into confluent complexes.</text>
</comment>
<comment type="subcellular location">
    <molecule>Non-structural protein 8</molecule>
    <subcellularLocation>
        <location evidence="1">Host cytoplasm</location>
        <location evidence="1">Host perinuclear region</location>
    </subcellularLocation>
    <text>nsp7, nsp8, nsp9 and nsp10 are localized in cytoplasmic foci, largely perinuclear. Late in infection, they merge into confluent complexes.</text>
</comment>
<comment type="subcellular location">
    <molecule>Viral protein genome-linked nsp9</molecule>
    <subcellularLocation>
        <location evidence="1">Host cytoplasm</location>
        <location evidence="1">Host perinuclear region</location>
    </subcellularLocation>
    <text>nsp7, nsp8, nsp9 and nsp10 are localized in cytoplasmic foci, largely perinuclear. Late in infection, they merge into confluent complexes.</text>
</comment>
<comment type="subcellular location">
    <molecule>Non-structural protein 10</molecule>
    <subcellularLocation>
        <location evidence="1">Host cytoplasm</location>
        <location evidence="1">Host perinuclear region</location>
    </subcellularLocation>
    <text>nsp7, nsp8, nsp9 and nsp10 are localized in cytoplasmic foci, largely perinuclear. Late in infection, they merge into confluent complexes.</text>
</comment>
<comment type="subcellular location">
    <molecule>Helicase nsp13</molecule>
    <subcellularLocation>
        <location evidence="35">Host endoplasmic reticulum-Golgi intermediate compartment</location>
    </subcellularLocation>
    <text>The helicase interacts with the N protein in membranous complexes and colocalizes with sites of synthesis of new viral RNA.</text>
</comment>
<comment type="subcellular location">
    <molecule>Uridylate-specific endoribonuclease nsp15</molecule>
    <subcellularLocation>
        <location evidence="1">Host cytoplasm</location>
        <location evidence="1">Host perinuclear region</location>
    </subcellularLocation>
</comment>
<comment type="alternative products">
    <event type="ribosomal frameshifting"/>
    <isoform>
        <id>P0C6X3-1</id>
        <name>Replicase polyprotein 1ab</name>
        <name>pp1ab</name>
        <sequence type="displayed"/>
    </isoform>
    <isoform>
        <id>P0C6U4-1</id>
        <name>Replicase polyprotein 1a</name>
        <name>pp1a</name>
        <name>ORF1a polyprotein</name>
        <sequence type="external"/>
    </isoform>
</comment>
<comment type="domain">
    <text>The hydrophobic domains (HD) could mediate the membrane association of the replication complex and thereby alter the architecture of the host cell membrane.</text>
</comment>
<comment type="PTM">
    <text evidence="1">Specific enzymatic cleavages in vivo by its own proteases yield mature proteins. 3CL-PRO and PL-PRO proteinases are autocatalytically processed (By similarity).</text>
</comment>
<comment type="miscellaneous">
    <text>Isolate N2 belongs to genotype B.</text>
</comment>
<comment type="miscellaneous">
    <molecule>Isoform Replicase polyprotein 1ab</molecule>
    <text>Produced by -1 ribosomal frameshifting at the 1a-1b genes boundary.</text>
</comment>
<comment type="similarity">
    <text evidence="35">Belongs to the coronaviruses polyprotein 1ab family.</text>
</comment>